<gene>
    <name type="primary">FGA</name>
</gene>
<reference key="1">
    <citation type="journal article" date="1992" name="Biochemistry">
        <title>Carboxy-terminal-extended variant of the human fibrinogen alpha subunit: a novel exon conferring marked homology to beta and gamma subunits.</title>
        <authorList>
            <person name="Fu Y."/>
            <person name="Weissbach L."/>
            <person name="Plant P.W."/>
            <person name="Oddoux C."/>
            <person name="Cao Y."/>
            <person name="Liang T.J."/>
            <person name="Roy S.N."/>
            <person name="Redman C.M."/>
            <person name="Grieninger G."/>
        </authorList>
    </citation>
    <scope>NUCLEOTIDE SEQUENCE [GENOMIC DNA]</scope>
    <scope>ALTERNATIVE SPLICING (ISOFORMS 1 AND 2)</scope>
</reference>
<reference key="2">
    <citation type="book" date="1994" name="Index of variant human fibrinogens">
        <title>Fibrinogen DNA and protein sequences.</title>
        <editorList>
            <person name="Ebert R.F."/>
        </editorList>
        <authorList>
            <person name="Chung D.W."/>
            <person name="Grieninger G."/>
        </authorList>
    </citation>
    <scope>NUCLEOTIDE SEQUENCE (ISOFORM 1)</scope>
</reference>
<reference key="3">
    <citation type="submission" date="2001-06" db="EMBL/GenBank/DDBJ databases">
        <authorList>
            <consortium name="SeattleSNPs variation discovery resource"/>
        </authorList>
    </citation>
    <scope>NUCLEOTIDE SEQUENCE [GENOMIC DNA]</scope>
    <scope>VARIANTS VAL-6; ALA-331 AND ALA-456</scope>
</reference>
<reference key="4">
    <citation type="journal article" date="2004" name="Nat. Genet.">
        <title>Complete sequencing and characterization of 21,243 full-length human cDNAs.</title>
        <authorList>
            <person name="Ota T."/>
            <person name="Suzuki Y."/>
            <person name="Nishikawa T."/>
            <person name="Otsuki T."/>
            <person name="Sugiyama T."/>
            <person name="Irie R."/>
            <person name="Wakamatsu A."/>
            <person name="Hayashi K."/>
            <person name="Sato H."/>
            <person name="Nagai K."/>
            <person name="Kimura K."/>
            <person name="Makita H."/>
            <person name="Sekine M."/>
            <person name="Obayashi M."/>
            <person name="Nishi T."/>
            <person name="Shibahara T."/>
            <person name="Tanaka T."/>
            <person name="Ishii S."/>
            <person name="Yamamoto J."/>
            <person name="Saito K."/>
            <person name="Kawai Y."/>
            <person name="Isono Y."/>
            <person name="Nakamura Y."/>
            <person name="Nagahari K."/>
            <person name="Murakami K."/>
            <person name="Yasuda T."/>
            <person name="Iwayanagi T."/>
            <person name="Wagatsuma M."/>
            <person name="Shiratori A."/>
            <person name="Sudo H."/>
            <person name="Hosoiri T."/>
            <person name="Kaku Y."/>
            <person name="Kodaira H."/>
            <person name="Kondo H."/>
            <person name="Sugawara M."/>
            <person name="Takahashi M."/>
            <person name="Kanda K."/>
            <person name="Yokoi T."/>
            <person name="Furuya T."/>
            <person name="Kikkawa E."/>
            <person name="Omura Y."/>
            <person name="Abe K."/>
            <person name="Kamihara K."/>
            <person name="Katsuta N."/>
            <person name="Sato K."/>
            <person name="Tanikawa M."/>
            <person name="Yamazaki M."/>
            <person name="Ninomiya K."/>
            <person name="Ishibashi T."/>
            <person name="Yamashita H."/>
            <person name="Murakawa K."/>
            <person name="Fujimori K."/>
            <person name="Tanai H."/>
            <person name="Kimata M."/>
            <person name="Watanabe M."/>
            <person name="Hiraoka S."/>
            <person name="Chiba Y."/>
            <person name="Ishida S."/>
            <person name="Ono Y."/>
            <person name="Takiguchi S."/>
            <person name="Watanabe S."/>
            <person name="Yosida M."/>
            <person name="Hotuta T."/>
            <person name="Kusano J."/>
            <person name="Kanehori K."/>
            <person name="Takahashi-Fujii A."/>
            <person name="Hara H."/>
            <person name="Tanase T.-O."/>
            <person name="Nomura Y."/>
            <person name="Togiya S."/>
            <person name="Komai F."/>
            <person name="Hara R."/>
            <person name="Takeuchi K."/>
            <person name="Arita M."/>
            <person name="Imose N."/>
            <person name="Musashino K."/>
            <person name="Yuuki H."/>
            <person name="Oshima A."/>
            <person name="Sasaki N."/>
            <person name="Aotsuka S."/>
            <person name="Yoshikawa Y."/>
            <person name="Matsunawa H."/>
            <person name="Ichihara T."/>
            <person name="Shiohata N."/>
            <person name="Sano S."/>
            <person name="Moriya S."/>
            <person name="Momiyama H."/>
            <person name="Satoh N."/>
            <person name="Takami S."/>
            <person name="Terashima Y."/>
            <person name="Suzuki O."/>
            <person name="Nakagawa S."/>
            <person name="Senoh A."/>
            <person name="Mizoguchi H."/>
            <person name="Goto Y."/>
            <person name="Shimizu F."/>
            <person name="Wakebe H."/>
            <person name="Hishigaki H."/>
            <person name="Watanabe T."/>
            <person name="Sugiyama A."/>
            <person name="Takemoto M."/>
            <person name="Kawakami B."/>
            <person name="Yamazaki M."/>
            <person name="Watanabe K."/>
            <person name="Kumagai A."/>
            <person name="Itakura S."/>
            <person name="Fukuzumi Y."/>
            <person name="Fujimori Y."/>
            <person name="Komiyama M."/>
            <person name="Tashiro H."/>
            <person name="Tanigami A."/>
            <person name="Fujiwara T."/>
            <person name="Ono T."/>
            <person name="Yamada K."/>
            <person name="Fujii Y."/>
            <person name="Ozaki K."/>
            <person name="Hirao M."/>
            <person name="Ohmori Y."/>
            <person name="Kawabata A."/>
            <person name="Hikiji T."/>
            <person name="Kobatake N."/>
            <person name="Inagaki H."/>
            <person name="Ikema Y."/>
            <person name="Okamoto S."/>
            <person name="Okitani R."/>
            <person name="Kawakami T."/>
            <person name="Noguchi S."/>
            <person name="Itoh T."/>
            <person name="Shigeta K."/>
            <person name="Senba T."/>
            <person name="Matsumura K."/>
            <person name="Nakajima Y."/>
            <person name="Mizuno T."/>
            <person name="Morinaga M."/>
            <person name="Sasaki M."/>
            <person name="Togashi T."/>
            <person name="Oyama M."/>
            <person name="Hata H."/>
            <person name="Watanabe M."/>
            <person name="Komatsu T."/>
            <person name="Mizushima-Sugano J."/>
            <person name="Satoh T."/>
            <person name="Shirai Y."/>
            <person name="Takahashi Y."/>
            <person name="Nakagawa K."/>
            <person name="Okumura K."/>
            <person name="Nagase T."/>
            <person name="Nomura N."/>
            <person name="Kikuchi H."/>
            <person name="Masuho Y."/>
            <person name="Yamashita R."/>
            <person name="Nakai K."/>
            <person name="Yada T."/>
            <person name="Nakamura Y."/>
            <person name="Ohara O."/>
            <person name="Isogai T."/>
            <person name="Sugano S."/>
        </authorList>
    </citation>
    <scope>NUCLEOTIDE SEQUENCE [LARGE SCALE MRNA] (ISOFORM 2)</scope>
    <scope>VARIANT ALA-331</scope>
    <source>
        <tissue>Heart</tissue>
    </source>
</reference>
<reference key="5">
    <citation type="submission" date="2005-09" db="EMBL/GenBank/DDBJ databases">
        <authorList>
            <person name="Mural R.J."/>
            <person name="Istrail S."/>
            <person name="Sutton G.G."/>
            <person name="Florea L."/>
            <person name="Halpern A.L."/>
            <person name="Mobarry C.M."/>
            <person name="Lippert R."/>
            <person name="Walenz B."/>
            <person name="Shatkay H."/>
            <person name="Dew I."/>
            <person name="Miller J.R."/>
            <person name="Flanigan M.J."/>
            <person name="Edwards N.J."/>
            <person name="Bolanos R."/>
            <person name="Fasulo D."/>
            <person name="Halldorsson B.V."/>
            <person name="Hannenhalli S."/>
            <person name="Turner R."/>
            <person name="Yooseph S."/>
            <person name="Lu F."/>
            <person name="Nusskern D.R."/>
            <person name="Shue B.C."/>
            <person name="Zheng X.H."/>
            <person name="Zhong F."/>
            <person name="Delcher A.L."/>
            <person name="Huson D.H."/>
            <person name="Kravitz S.A."/>
            <person name="Mouchard L."/>
            <person name="Reinert K."/>
            <person name="Remington K.A."/>
            <person name="Clark A.G."/>
            <person name="Waterman M.S."/>
            <person name="Eichler E.E."/>
            <person name="Adams M.D."/>
            <person name="Hunkapiller M.W."/>
            <person name="Myers E.W."/>
            <person name="Venter J.C."/>
        </authorList>
    </citation>
    <scope>NUCLEOTIDE SEQUENCE [LARGE SCALE GENOMIC DNA]</scope>
</reference>
<reference key="6">
    <citation type="journal article" date="2004" name="Genome Res.">
        <title>The status, quality, and expansion of the NIH full-length cDNA project: the Mammalian Gene Collection (MGC).</title>
        <authorList>
            <consortium name="The MGC Project Team"/>
        </authorList>
    </citation>
    <scope>NUCLEOTIDE SEQUENCE [LARGE SCALE MRNA] (ISOFORM 2)</scope>
</reference>
<reference key="7">
    <citation type="journal article" date="1990" name="Adv. Exp. Med. Biol.">
        <title>Nucleotide sequences of the three genes coding for human fibrinogen.</title>
        <authorList>
            <person name="Chung D.W."/>
            <person name="Harris J.E."/>
            <person name="Davie E.W."/>
        </authorList>
    </citation>
    <scope>NUCLEOTIDE SEQUENCE OF 1-655 (ISOFORM 1)</scope>
    <source>
        <tissue>Liver</tissue>
    </source>
</reference>
<reference key="8">
    <citation type="journal article" date="1983" name="Proc. Natl. Acad. Sci. U.S.A.">
        <title>Partial mRNA sequences for human A alpha, B beta, and gamma fibrinogen chains: evolutionary and functional implications.</title>
        <authorList>
            <person name="Kant J.A."/>
            <person name="Lord S.T."/>
            <person name="Crabtree G.R."/>
        </authorList>
    </citation>
    <scope>NUCLEOTIDE SEQUENCE [MRNA] (ISOFORM 2)</scope>
</reference>
<reference key="9">
    <citation type="journal article" date="1983" name="Biochemistry">
        <title>Characterization of a complementary deoxyribonucleic acid coding for the alpha chain of human fibrinogen.</title>
        <authorList>
            <person name="Rixon M.W."/>
            <person name="Chan W.-Y."/>
            <person name="Davie E.W."/>
            <person name="Chung D.W."/>
        </authorList>
    </citation>
    <scope>NUCLEOTIDE SEQUENCE [MRNA] OF 1-629</scope>
</reference>
<reference key="10">
    <citation type="book" date="1980" name="Protides of the biological fluids, Proc. 28th colloquium">
        <title>Human fibrinogen: sequence, sulfur bridges, glycosylation and some structural variants.</title>
        <editorList>
            <person name="Peeters H."/>
        </editorList>
        <authorList>
            <person name="Henschen A."/>
            <person name="Lottspeich F."/>
            <person name="Southan C."/>
            <person name="Topfer-Petersen E."/>
        </authorList>
    </citation>
    <scope>PROTEIN SEQUENCE OF 20-629</scope>
</reference>
<reference key="11">
    <citation type="journal article" date="1979" name="Biochemistry">
        <title>Amino acid sequence studies on the alpha chain of human fibrinogen. Overlapping sequences providing the complete sequence.</title>
        <authorList>
            <person name="Watt K.W.K."/>
            <person name="Cottrell B.A."/>
            <person name="Strong D.D."/>
            <person name="Doolittle R.F."/>
        </authorList>
    </citation>
    <scope>PROTEIN SEQUENCE OF 20-629</scope>
    <scope>DISULFIDE BONDS</scope>
    <scope>SUBUNIT</scope>
</reference>
<reference key="12">
    <citation type="journal article" date="1983" name="Nucleic Acids Res.">
        <title>Isolation and characterisation of cDNA clones for the A alpha- and gamma-chains of human fibrinogen.</title>
        <authorList>
            <person name="Imam A.M.A."/>
            <person name="Eaton M.A.W."/>
            <person name="Williamson R."/>
            <person name="Humphries S."/>
        </authorList>
    </citation>
    <scope>NUCLEOTIDE SEQUENCE [MRNA] OF 110-156</scope>
</reference>
<reference key="13">
    <citation type="journal article" date="1983" name="Ann. N. Y. Acad. Sci.">
        <title>Cloning of fibrinogen genes and their cDNA.</title>
        <authorList>
            <person name="Chung D.W."/>
            <person name="Rixon M.W."/>
            <person name="Que B.G."/>
            <person name="Davie E.W."/>
        </authorList>
    </citation>
    <scope>NUCLEOTIDE SEQUENCE OF 605-644 (ISOFORM 2)</scope>
</reference>
<reference key="14">
    <citation type="journal article" date="1965" name="Acta Chem. Scand.">
        <title>Studies on fibrinopeptides from primates.</title>
        <authorList>
            <person name="Blombaeck B."/>
            <person name="Blombaeck M."/>
            <person name="Grondahl N.J."/>
            <person name="Guthrie C."/>
            <person name="Hinton M."/>
        </authorList>
    </citation>
    <scope>PROTEIN SEQUENCE OF 20-35</scope>
</reference>
<reference key="15">
    <citation type="journal article" date="1978" name="Thromb. Res.">
        <title>The arrangement of disulfide bonds in fragment D from human fibrinogen.</title>
        <authorList>
            <person name="Bouma H."/>
            <person name="Takagi T."/>
            <person name="Doolittle R.F."/>
        </authorList>
    </citation>
    <scope>DISULFIDE BONDS</scope>
    <scope>SUBUNIT</scope>
</reference>
<reference key="16">
    <citation type="journal article" date="1979" name="Biochemistry">
        <title>Amino acid sequence studies on the alpha chain of human fibrinogen. Exact location of cross-linking acceptor sites.</title>
        <authorList>
            <person name="Cottrell B.A."/>
            <person name="Strong D.D."/>
            <person name="Watt K.W.K."/>
            <person name="Doolittle R.F."/>
        </authorList>
    </citation>
    <scope>CROSS-LINKING ACCEPTOR SITES</scope>
</reference>
<reference key="17">
    <citation type="journal article" date="1978" name="J. Biol. Chem.">
        <title>Localization of the alpha-chain cross-link acceptor sites of human fibrin.</title>
        <authorList>
            <person name="Fretto L.J."/>
            <person name="Ferguson E.W."/>
            <person name="Steinman H.M."/>
            <person name="McKee P.A."/>
        </authorList>
    </citation>
    <scope>CROSS-LINKING ACCEPTOR SITES</scope>
</reference>
<reference key="18">
    <citation type="journal article" date="2005" name="J. Proteome Res.">
        <title>Human plasma N-glycoproteome analysis by immunoaffinity subtraction, hydrazide chemistry, and mass spectrometry.</title>
        <authorList>
            <person name="Liu T."/>
            <person name="Qian W.-J."/>
            <person name="Gritsenko M.A."/>
            <person name="Camp D.G. II"/>
            <person name="Monroe M.E."/>
            <person name="Moore R.J."/>
            <person name="Smith R.D."/>
        </authorList>
    </citation>
    <scope>GLYCOSYLATION [LARGE SCALE ANALYSIS] AT ASN-686</scope>
    <source>
        <tissue>Plasma</tissue>
    </source>
</reference>
<reference key="19">
    <citation type="journal article" date="1976" name="Thromb. Res.">
        <title>Disulfide bridges in NH2-terminal part of human fibrinogen.</title>
        <authorList>
            <person name="Blombaeck B."/>
            <person name="Hessel B."/>
            <person name="Hogg D."/>
        </authorList>
    </citation>
    <scope>DISULFIDE BONDS</scope>
    <scope>SUBUNIT</scope>
</reference>
<reference key="20">
    <citation type="journal article" date="1984" name="Annu. Rev. Biochem.">
        <title>Fibrinogen and fibrin.</title>
        <authorList>
            <person name="Doolittle R.F."/>
        </authorList>
    </citation>
    <scope>REVIEW</scope>
    <scope>ELECTRON MICROSCOPY</scope>
    <scope>POLYMERIZATION</scope>
    <scope>LIGANDS</scope>
</reference>
<reference key="21">
    <citation type="journal article" date="1986" name="J. Biol. Chem.">
        <title>Cross-linking site in fibrinogen for alpha 2-plasmin inhibitor.</title>
        <authorList>
            <person name="Kimura S."/>
            <person name="Aoki N."/>
        </authorList>
    </citation>
    <scope>CROSS-LINKING SITE FOR ALPHA-2-PLASMIN INHIBITOR</scope>
</reference>
<reference key="22">
    <citation type="journal article" date="1983" name="Biochem. Biophys. Res. Commun.">
        <title>Phosphorylation of fibrinogen by casein kinase 1.</title>
        <authorList>
            <person name="Itarte E."/>
            <person name="Plana M."/>
            <person name="Guasch M.D."/>
            <person name="Martos C."/>
        </authorList>
    </citation>
    <scope>PHOSPHORYLATION</scope>
</reference>
<reference key="23">
    <citation type="journal article" date="2001" name="J. Biol. Chem.">
        <title>Extracellular fibrinogen-binding protein, Efb, from Staphylococcus aureus blocks platelet aggregation due to its binding to the alpha-chain.</title>
        <authorList>
            <person name="Palma M."/>
            <person name="Shannon O."/>
            <person name="Quezada H.C."/>
            <person name="Berg A."/>
            <person name="Flock J.I."/>
        </authorList>
    </citation>
    <scope>INTERACTION WITH STAPHYLOCOCCUS AUREUS PROTEIN FIB (MICROBIAL INFECTION)</scope>
</reference>
<reference key="24">
    <citation type="journal article" date="2006" name="Pituitary">
        <title>Phosphoproteomic analysis of the human pituitary.</title>
        <authorList>
            <person name="Beranova-Giorgianni S."/>
            <person name="Zhao Y."/>
            <person name="Desiderio D.M."/>
            <person name="Giorgianni F."/>
        </authorList>
    </citation>
    <scope>PHOSPHORYLATION [LARGE SCALE ANALYSIS] AT SER-22</scope>
    <scope>IDENTIFICATION BY MASS SPECTROMETRY [LARGE SCALE ANALYSIS]</scope>
    <source>
        <tissue>Pituitary</tissue>
    </source>
</reference>
<reference key="25">
    <citation type="journal article" date="2008" name="J. Proteome Res.">
        <title>Phosphoproteome of resting human platelets.</title>
        <authorList>
            <person name="Zahedi R.P."/>
            <person name="Lewandrowski U."/>
            <person name="Wiesner J."/>
            <person name="Wortelkamp S."/>
            <person name="Moebius J."/>
            <person name="Schuetz C."/>
            <person name="Walter U."/>
            <person name="Gambaryan S."/>
            <person name="Sickmann A."/>
        </authorList>
    </citation>
    <scope>PHOSPHORYLATION [LARGE SCALE ANALYSIS] AT THR-412 AND SER-609</scope>
    <scope>IDENTIFICATION BY MASS SPECTROMETRY [LARGE SCALE ANALYSIS]</scope>
    <source>
        <tissue>Platelet</tissue>
    </source>
</reference>
<reference key="26">
    <citation type="journal article" date="2009" name="J. Biol. Chem.">
        <title>Prolyl 4-hydroxylation of alpha-fibrinogen: a novel protein modification revealed by plasma proteomics.</title>
        <authorList>
            <person name="Ono M."/>
            <person name="Matsubara J."/>
            <person name="Honda K."/>
            <person name="Sakuma T."/>
            <person name="Hashiguchi T."/>
            <person name="Nose H."/>
            <person name="Nakamori S."/>
            <person name="Okusaka T."/>
            <person name="Kosuge T."/>
            <person name="Sata N."/>
            <person name="Nagai H."/>
            <person name="Ioka T."/>
            <person name="Tanaka S."/>
            <person name="Tsuchida A."/>
            <person name="Aoki T."/>
            <person name="Shimahara M."/>
            <person name="Yasunami Y."/>
            <person name="Itoi T."/>
            <person name="Moriyasu F."/>
            <person name="Negishi A."/>
            <person name="Kuwabara H."/>
            <person name="Shoji A."/>
            <person name="Hirohashi S."/>
            <person name="Yamada T."/>
        </authorList>
    </citation>
    <scope>HYDROXYLATION AT PRO-565</scope>
</reference>
<reference key="27">
    <citation type="journal article" date="2009" name="J. Proteome Res.">
        <title>Glycoproteomics analysis of human liver tissue by combination of multiple enzyme digestion and hydrazide chemistry.</title>
        <authorList>
            <person name="Chen R."/>
            <person name="Jiang X."/>
            <person name="Sun D."/>
            <person name="Han G."/>
            <person name="Wang F."/>
            <person name="Ye M."/>
            <person name="Wang L."/>
            <person name="Zou H."/>
        </authorList>
    </citation>
    <scope>GLYCOSYLATION [LARGE SCALE ANALYSIS] AT ASN-686</scope>
    <source>
        <tissue>Liver</tissue>
    </source>
</reference>
<reference key="28">
    <citation type="journal article" date="1990" name="J. Biol. Chem.">
        <title>A unique proteolytic fragment of human fibrinogen containing the A alpha COOH-terminal domain of the native molecule.</title>
        <authorList>
            <person name="Kirschbaum N.E."/>
            <person name="Budzynski A.Z."/>
        </authorList>
    </citation>
    <scope>CLEAVAGE BY HEMENTIN AND PLASMIN</scope>
</reference>
<reference key="29">
    <citation type="journal article" date="2011" name="BMC Syst. Biol.">
        <title>Initial characterization of the human central proteome.</title>
        <authorList>
            <person name="Burkard T.R."/>
            <person name="Planyavsky M."/>
            <person name="Kaupe I."/>
            <person name="Breitwieser F.P."/>
            <person name="Buerckstuemmer T."/>
            <person name="Bennett K.L."/>
            <person name="Superti-Furga G."/>
            <person name="Colinge J."/>
        </authorList>
    </citation>
    <scope>IDENTIFICATION BY MASS SPECTROMETRY [LARGE SCALE ANALYSIS]</scope>
</reference>
<reference key="30">
    <citation type="journal article" date="2012" name="J. Proteome Res.">
        <title>Glycoproteomic analysis of human fibrinogen reveals novel regions of O-glycosylation.</title>
        <authorList>
            <person name="Zauner G."/>
            <person name="Hoffmann M."/>
            <person name="Rapp E."/>
            <person name="Koeleman C.A."/>
            <person name="Dragan I."/>
            <person name="Deelder A.M."/>
            <person name="Wuhrer M."/>
            <person name="Hensbergen P.J."/>
        </authorList>
    </citation>
    <scope>GLYCOSYLATION AT THR-320 AND SER-351</scope>
</reference>
<reference key="31">
    <citation type="journal article" date="2013" name="PLoS Pathog.">
        <title>Phagocytosis escape by a Staphylococcus aureus protein that connects complement and coagulation proteins at the bacterial surface.</title>
        <authorList>
            <person name="Ko Y.P."/>
            <person name="Kuipers A."/>
            <person name="Freitag C.M."/>
            <person name="Jongerius I."/>
            <person name="Medina E."/>
            <person name="van Rooijen W.J."/>
            <person name="Spaan A.N."/>
            <person name="van Kessel K.P."/>
            <person name="Hoeoek M."/>
            <person name="Rooijakkers S.H."/>
        </authorList>
    </citation>
    <scope>INTERACTION WITH STAPHYLOCOCCUS AUREUS PROTEIN FIB (MICROBIAL INFECTION)</scope>
</reference>
<reference key="32">
    <citation type="journal article" date="2013" name="J. Proteome Res.">
        <title>Characterization of fibrinogen glycosylation and its importance for serum/plasma N-glycome analysis.</title>
        <authorList>
            <person name="Adamczyk B."/>
            <person name="Struwe W.B."/>
            <person name="Ercan A."/>
            <person name="Nigrovic P.A."/>
            <person name="Rudd P.M."/>
        </authorList>
    </citation>
    <scope>LACK OF GLYCOSYLATION</scope>
</reference>
<reference key="33">
    <citation type="journal article" date="2014" name="J. Proteomics">
        <title>An enzyme assisted RP-RPLC approach for in-depth analysis of human liver phosphoproteome.</title>
        <authorList>
            <person name="Bian Y."/>
            <person name="Song C."/>
            <person name="Cheng K."/>
            <person name="Dong M."/>
            <person name="Wang F."/>
            <person name="Huang J."/>
            <person name="Sun D."/>
            <person name="Wang L."/>
            <person name="Ye M."/>
            <person name="Zou H."/>
        </authorList>
    </citation>
    <scope>PHOSPHORYLATION [LARGE SCALE ANALYSIS] AT SER-45; SER-50; SER-281; SER-291; SER-294; THR-412; SER-451; SER-501; THR-505 AND SER-609</scope>
    <scope>IDENTIFICATION BY MASS SPECTROMETRY [LARGE SCALE ANALYSIS]</scope>
    <source>
        <tissue>Liver</tissue>
    </source>
</reference>
<reference key="34">
    <citation type="journal article" date="2015" name="Cell">
        <title>A single kinase generates the majority of the secreted phosphoproteome.</title>
        <authorList>
            <person name="Tagliabracci V.S."/>
            <person name="Wiley S.E."/>
            <person name="Guo X."/>
            <person name="Kinch L.N."/>
            <person name="Durrant E."/>
            <person name="Wen J."/>
            <person name="Xiao J."/>
            <person name="Cui J."/>
            <person name="Nguyen K.B."/>
            <person name="Engel J.L."/>
            <person name="Coon J.J."/>
            <person name="Grishin N."/>
            <person name="Pinna L.A."/>
            <person name="Pagliarini D.J."/>
            <person name="Dixon J.E."/>
        </authorList>
    </citation>
    <scope>PHOSPHORYLATION AT SER-45; SER-56; SER-364; SER-524; SER-560 AND SER-609</scope>
</reference>
<reference key="35">
    <citation type="journal article" date="1992" name="J. Biol. Chem.">
        <title>The structure of residues 7-16 of the A alpha-chain of human fibrinogen bound to bovine thrombin at 2.3-A resolution.</title>
        <authorList>
            <person name="Martin P.D."/>
            <person name="Robertson W."/>
            <person name="Turk D."/>
            <person name="Huber R."/>
            <person name="Bode W."/>
            <person name="Edwards B.F.P."/>
        </authorList>
    </citation>
    <scope>X-RAY CRYSTALLOGRAPHY (2.3 ANGSTROMS) OF 26-39</scope>
</reference>
<reference key="36">
    <citation type="journal article" date="1997" name="Nature">
        <title>Crystal structures of fragment D from human fibrinogen and its crosslinked counterpart from fibrin.</title>
        <authorList>
            <person name="Spraggon G."/>
            <person name="Everse S.J."/>
            <person name="Doolittle R.F."/>
        </authorList>
    </citation>
    <scope>X-RAY CRYSTALLOGRAPHY (2.90 ANGSTROMS) OF 130-216</scope>
    <scope>DISULFIDE BONDS</scope>
    <scope>SUBUNIT</scope>
</reference>
<reference key="37">
    <citation type="journal article" date="1998" name="Biochemistry">
        <title>Crystal structure of fragment double-D from human fibrin with two different bound ligands.</title>
        <authorList>
            <person name="Everse S.J."/>
            <person name="Spraggon G."/>
            <person name="Veerapandian L."/>
            <person name="Riley M."/>
            <person name="Doolittle R.F."/>
        </authorList>
    </citation>
    <scope>X-RAY CRYSTALLOGRAPHY (2.3 ANGSTROMS) OF 130-216</scope>
    <scope>SUBUNIT</scope>
    <scope>DISULFIDE BONDS</scope>
    <scope>SUBCELLULAR LOCATION</scope>
    <scope>TISSUE SPECIFICITY</scope>
    <scope>COILED COIL DOMAIN</scope>
</reference>
<reference key="38">
    <citation type="journal article" date="1998" name="Proc. Natl. Acad. Sci. U.S.A.">
        <title>Crystal structure of a recombinant alphaEC domain from human fibrinogen-420.</title>
        <authorList>
            <person name="Spraggon G."/>
            <person name="Applegate D."/>
            <person name="Everse S.J."/>
            <person name="Zhang J.Z."/>
            <person name="Veerapandian L."/>
            <person name="Redman C."/>
            <person name="Doolittle R.F."/>
            <person name="Grieninger G."/>
        </authorList>
    </citation>
    <scope>X-RAY CRYSTALLOGRAPHY (2.10 ANGSTROMS) OF 666-866 IN COMPLEX WITH CALCIUM IONS</scope>
    <scope>GLYCOSYLATION AT ASN-686</scope>
    <scope>DISULFIDE BONDS</scope>
    <scope>SUBUNIT</scope>
</reference>
<reference key="39">
    <citation type="journal article" date="1999" name="Biochemistry">
        <title>Conformational changes in fragments D and double-D from human fibrin(ogen) upon binding the peptide ligand Gly-His-Arg-Pro-amide.</title>
        <authorList>
            <person name="Everse S.J."/>
            <person name="Spraggon G."/>
            <person name="Veerapandian L."/>
            <person name="Doolittle R.F."/>
        </authorList>
    </citation>
    <scope>X-RAY CRYSTALLOGRAPHY (2.50 ANGSTROMS) OF 130-216</scope>
    <scope>DISULFIDE BONDS</scope>
</reference>
<reference key="40">
    <citation type="journal article" date="2009" name="Biochemistry">
        <title>Crystal structure of human fibrinogen.</title>
        <authorList>
            <person name="Kollman J.M."/>
            <person name="Pandi L."/>
            <person name="Sawaya M.R."/>
            <person name="Riley M."/>
            <person name="Doolittle R.F."/>
        </authorList>
    </citation>
    <scope>X-RAY CRYSTALLOGRAPHY (2.90 ANGSTROMS) OF 20-581</scope>
    <scope>SUBUNIT</scope>
    <scope>DISULFIDE BONDS</scope>
    <scope>COILED COIL DOMAIN</scope>
    <scope>SUBCELLULAR LOCATION</scope>
    <scope>TISSUE SPECIFICITY</scope>
</reference>
<reference key="41">
    <citation type="journal article" date="1991" name="Blood">
        <title>Fibrinogen Kyoto II, a new congenitally abnormal molecule, characterized by the replacement of A alpha proline-18 by leucine.</title>
        <authorList>
            <person name="Yoshida N."/>
            <person name="Okuma M."/>
            <person name="Hirata H."/>
            <person name="Matsuda M."/>
            <person name="Yamazumi K."/>
            <person name="Asakura S."/>
        </authorList>
    </citation>
    <scope>VARIANT KYOTO-2 LEU-37</scope>
</reference>
<reference key="42">
    <citation type="journal article" date="1992" name="J. Clin. Invest.">
        <title>Fibrinogen Lima: a homozygous dysfibrinogen with an A alpha-arginine-141 to serine substitution associated with extra N-glycosylation at A alpha-asparagine-139. Impaired fibrin gel formation but normal fibrin-facilitated plasminogen activation catalyzed by tissue-type plasminogen activator.</title>
        <authorList>
            <person name="Maekawa H."/>
            <person name="Yamazumi K."/>
            <person name="Muramatsu S."/>
            <person name="Kaneko M."/>
            <person name="Hirata H."/>
            <person name="Takahashi N."/>
            <person name="Arocha-Pinango C.L."/>
            <person name="Rodriguez S."/>
            <person name="Nagy H."/>
            <person name="Perez-Requejo J.L."/>
            <person name="Matsuda M."/>
        </authorList>
    </citation>
    <scope>VARIANT LIMA SER-160</scope>
</reference>
<reference key="43">
    <citation type="journal article" date="1991" name="J. Biol. Chem.">
        <title>An A alpha Ser-434 to N-glycosylated Asn substitution in a dysfibrinogen, fibrinogen Caracas II, characterized by impaired fibrin gel formation.</title>
        <authorList>
            <person name="Maekawa H."/>
            <person name="Yamazumi K."/>
            <person name="Muramatsu S."/>
            <person name="Kaneko M."/>
            <person name="Hirata H."/>
            <person name="Takahashi N."/>
            <person name="de Bosch N.B."/>
            <person name="Carvajal Z."/>
            <person name="Ojeda A."/>
            <person name="Arocha-Pinango C.L."/>
            <person name="Matsuda M."/>
        </authorList>
    </citation>
    <scope>GLYCOSYLATION AT ASN-453 (VARIANT ASN-453)</scope>
    <scope>VARIANT CARACAS-2 ASN-453</scope>
</reference>
<reference key="44">
    <citation type="journal article" date="1993" name="J. Clin. Invest.">
        <title>Molecular basis for fibrinogen Dusart (A alpha 554 Arg--&gt;Cys) and its association with abnormal fibrin polymerization and thrombophilia.</title>
        <authorList>
            <person name="Koopman J."/>
            <person name="Haverkate F."/>
            <person name="Grimbergen J."/>
            <person name="Lord S.T."/>
            <person name="Mosesson M.W."/>
            <person name="Diorio J.P."/>
            <person name="Siebenlist K.S."/>
            <person name="Legrand C."/>
            <person name="Soria J."/>
            <person name="Soria C."/>
            <person name="Caen J.P."/>
        </authorList>
    </citation>
    <scope>INVOLVEMENT IN DYSFIBRIN</scope>
    <scope>VARIANT DYSFIBRIN CYS-573</scope>
</reference>
<reference key="45">
    <citation type="journal article" date="1993" name="Nat. Genet.">
        <title>Hereditary renal amyloidosis associated with a mutant fibrinogen alpha-chain.</title>
        <authorList>
            <person name="Benson M.D."/>
            <person name="Liepnieks J."/>
            <person name="Uemichi T."/>
            <person name="Wheeler G."/>
            <person name="Correa R."/>
        </authorList>
    </citation>
    <scope>VARIANT AMYLD2 LEU-573</scope>
    <scope>INVOLVEMENT IN AMYLD2</scope>
</reference>
<reference key="46">
    <citation type="journal article" date="1993" name="Surg. Today">
        <title>Fibrinogen Osaka IV: a congenital dysfibrinogenemia found in a patient originally reported in relation to surgery, now defined to have an A alpha arginine-16 to histidine substitution.</title>
        <authorList>
            <person name="Yamazumi K."/>
            <person name="Terukina S."/>
            <person name="Matsuda M."/>
            <person name="Kanbayashi J."/>
            <person name="Sakon M."/>
            <person name="Tsujinaka T."/>
        </authorList>
    </citation>
    <scope>VARIANT OSAKA IV HIS-35</scope>
</reference>
<reference key="47">
    <citation type="journal article" date="1994" name="J. Clin. Invest.">
        <title>Hereditary renal amyloidosis with a novel variant fibrinogen.</title>
        <authorList>
            <person name="Uemichi T."/>
            <person name="Liepnieks J.J."/>
            <person name="Benson M.D."/>
        </authorList>
    </citation>
    <scope>VARIANT AMYLD2 VAL-545</scope>
</reference>
<reference key="48">
    <citation type="journal article" date="1995" name="J. Clin. Invest.">
        <title>Aberrant hepatic processing causes removal of activation peptide and primary polymerisation site from fibrinogen Canterbury (A-alpha 20 Val-to-Asp).</title>
        <authorList>
            <person name="Brennan S.O."/>
            <person name="Hammonds B."/>
            <person name="George P.M."/>
        </authorList>
    </citation>
    <scope>VARIANT CANTERBURY ASP-39</scope>
</reference>
<reference key="49">
    <citation type="journal article" date="1999" name="Nat. Genet.">
        <title>Characterization of single-nucleotide polymorphisms in coding regions of human genes.</title>
        <authorList>
            <person name="Cargill M."/>
            <person name="Altshuler D."/>
            <person name="Ireland J."/>
            <person name="Sklar P."/>
            <person name="Ardlie K."/>
            <person name="Patil N."/>
            <person name="Shaw N."/>
            <person name="Lane C.R."/>
            <person name="Lim E.P."/>
            <person name="Kalyanaraman N."/>
            <person name="Nemesh J."/>
            <person name="Ziaugra L."/>
            <person name="Friedland L."/>
            <person name="Rolfe A."/>
            <person name="Warrington J."/>
            <person name="Lipshutz R."/>
            <person name="Daley G.Q."/>
            <person name="Lander E.S."/>
        </authorList>
    </citation>
    <scope>VARIANTS ALA-331 AND GLU-446</scope>
</reference>
<reference key="50">
    <citation type="journal article" date="1999" name="Nat. Genet.">
        <authorList>
            <person name="Cargill M."/>
            <person name="Altshuler D."/>
            <person name="Ireland J."/>
            <person name="Sklar P."/>
            <person name="Ardlie K."/>
            <person name="Patil N."/>
            <person name="Shaw N."/>
            <person name="Lane C.R."/>
            <person name="Lim E.P."/>
            <person name="Kalyanaraman N."/>
            <person name="Nemesh J."/>
            <person name="Ziaugra L."/>
            <person name="Friedland L."/>
            <person name="Rolfe A."/>
            <person name="Warrington J."/>
            <person name="Lipshutz R."/>
            <person name="Daley G.Q."/>
            <person name="Lander E.S."/>
        </authorList>
    </citation>
    <scope>ERRATUM OF PUBMED:10391209</scope>
</reference>
<reference key="51">
    <citation type="journal article" date="2006" name="Br. J. Haematol.">
        <title>The fibrinogen Aalpha R16C mutation results in fibrinolytic resistance.</title>
        <authorList>
            <person name="Flood V.H."/>
            <person name="Al-Mondhiry H.A."/>
            <person name="Farrell D.H."/>
        </authorList>
    </citation>
    <scope>INVOLVEMENT IN DYSFIBRIN</scope>
    <scope>VARIANT DYSFIBRIN CYS-35</scope>
</reference>
<reference key="52">
    <citation type="journal article" date="2015" name="Thromb. Haemost.">
        <title>Clinical and molecular characterisation of 21 patients affected by quantitative fibrinogen deficiency.</title>
        <authorList>
            <person name="Asselta R."/>
            <person name="Plate M."/>
            <person name="Robusto M."/>
            <person name="Borhany M."/>
            <person name="Guella I."/>
            <person name="Solda G."/>
            <person name="Afrasiabi A."/>
            <person name="Menegatti M."/>
            <person name="Shamsi T."/>
            <person name="Peyvandi F."/>
            <person name="Duga S."/>
        </authorList>
    </citation>
    <scope>INVOLVEMENT IN CAFBN; VARIANTS CAFBN ARG-55; PRO-129 AND TRP-184</scope>
    <scope>CHARACTERIZATION OF VARIANTS CAFBN ARG-55; PRO-129 AND TRP-184</scope>
</reference>
<evidence type="ECO:0000250" key="1">
    <source>
        <dbReference type="UniProtKB" id="E9PV24"/>
    </source>
</evidence>
<evidence type="ECO:0000250" key="2">
    <source>
        <dbReference type="UniProtKB" id="P02672"/>
    </source>
</evidence>
<evidence type="ECO:0000255" key="3"/>
<evidence type="ECO:0000255" key="4">
    <source>
        <dbReference type="PROSITE-ProRule" id="PRU00739"/>
    </source>
</evidence>
<evidence type="ECO:0000256" key="5">
    <source>
        <dbReference type="SAM" id="MobiDB-lite"/>
    </source>
</evidence>
<evidence type="ECO:0000269" key="6">
    <source>
    </source>
</evidence>
<evidence type="ECO:0000269" key="7">
    <source>
    </source>
</evidence>
<evidence type="ECO:0000269" key="8">
    <source>
    </source>
</evidence>
<evidence type="ECO:0000269" key="9">
    <source>
    </source>
</evidence>
<evidence type="ECO:0000269" key="10">
    <source>
    </source>
</evidence>
<evidence type="ECO:0000269" key="11">
    <source>
    </source>
</evidence>
<evidence type="ECO:0000269" key="12">
    <source>
    </source>
</evidence>
<evidence type="ECO:0000269" key="13">
    <source>
    </source>
</evidence>
<evidence type="ECO:0000269" key="14">
    <source>
    </source>
</evidence>
<evidence type="ECO:0000269" key="15">
    <source>
    </source>
</evidence>
<evidence type="ECO:0000269" key="16">
    <source>
    </source>
</evidence>
<evidence type="ECO:0000269" key="17">
    <source>
    </source>
</evidence>
<evidence type="ECO:0000269" key="18">
    <source>
    </source>
</evidence>
<evidence type="ECO:0000269" key="19">
    <source>
    </source>
</evidence>
<evidence type="ECO:0000269" key="20">
    <source>
    </source>
</evidence>
<evidence type="ECO:0000269" key="21">
    <source>
    </source>
</evidence>
<evidence type="ECO:0000269" key="22">
    <source>
    </source>
</evidence>
<evidence type="ECO:0000269" key="23">
    <source>
    </source>
</evidence>
<evidence type="ECO:0000269" key="24">
    <source>
    </source>
</evidence>
<evidence type="ECO:0000269" key="25">
    <source>
    </source>
</evidence>
<evidence type="ECO:0000269" key="26">
    <source>
    </source>
</evidence>
<evidence type="ECO:0000269" key="27">
    <source>
    </source>
</evidence>
<evidence type="ECO:0000269" key="28">
    <source>
    </source>
</evidence>
<evidence type="ECO:0000269" key="29">
    <source>
    </source>
</evidence>
<evidence type="ECO:0000269" key="30">
    <source>
    </source>
</evidence>
<evidence type="ECO:0000269" key="31">
    <source>
    </source>
</evidence>
<evidence type="ECO:0000269" key="32">
    <source>
    </source>
</evidence>
<evidence type="ECO:0000269" key="33">
    <source>
    </source>
</evidence>
<evidence type="ECO:0000269" key="34">
    <source ref="10"/>
</evidence>
<evidence type="ECO:0000269" key="35">
    <source ref="14"/>
</evidence>
<evidence type="ECO:0000269" key="36">
    <source ref="3"/>
</evidence>
<evidence type="ECO:0000303" key="37">
    <source>
    </source>
</evidence>
<evidence type="ECO:0000303" key="38">
    <source>
    </source>
</evidence>
<evidence type="ECO:0000303" key="39">
    <source>
    </source>
</evidence>
<evidence type="ECO:0000305" key="40"/>
<evidence type="ECO:0000305" key="41">
    <source>
    </source>
</evidence>
<evidence type="ECO:0007744" key="42">
    <source>
        <dbReference type="PDB" id="1FZD"/>
    </source>
</evidence>
<evidence type="ECO:0007744" key="43">
    <source>
    </source>
</evidence>
<evidence type="ECO:0007744" key="44">
    <source>
    </source>
</evidence>
<evidence type="ECO:0007744" key="45">
    <source>
    </source>
</evidence>
<evidence type="ECO:0007829" key="46">
    <source>
        <dbReference type="PDB" id="1BBR"/>
    </source>
</evidence>
<evidence type="ECO:0007829" key="47">
    <source>
        <dbReference type="PDB" id="1FZA"/>
    </source>
</evidence>
<evidence type="ECO:0007829" key="48">
    <source>
        <dbReference type="PDB" id="1FZC"/>
    </source>
</evidence>
<evidence type="ECO:0007829" key="49">
    <source>
        <dbReference type="PDB" id="1FZD"/>
    </source>
</evidence>
<evidence type="ECO:0007829" key="50">
    <source>
        <dbReference type="PDB" id="1RE3"/>
    </source>
</evidence>
<evidence type="ECO:0007829" key="51">
    <source>
        <dbReference type="PDB" id="3GHG"/>
    </source>
</evidence>
<evidence type="ECO:0007829" key="52">
    <source>
        <dbReference type="PDB" id="4F27"/>
    </source>
</evidence>
<evidence type="ECO:0007829" key="53">
    <source>
        <dbReference type="PDB" id="5CFA"/>
    </source>
</evidence>
<name>FIBA_HUMAN</name>
<dbReference type="EMBL" id="M64982">
    <property type="protein sequence ID" value="AAA17056.1"/>
    <property type="molecule type" value="Genomic_DNA"/>
</dbReference>
<dbReference type="EMBL" id="M64982">
    <property type="protein sequence ID" value="AAA17055.1"/>
    <property type="molecule type" value="Genomic_DNA"/>
</dbReference>
<dbReference type="EMBL" id="M58569">
    <property type="protein sequence ID" value="AAC97142.1"/>
    <property type="molecule type" value="Transcribed_RNA"/>
</dbReference>
<dbReference type="EMBL" id="M58569">
    <property type="protein sequence ID" value="AAC97143.1"/>
    <property type="molecule type" value="Transcribed_RNA"/>
</dbReference>
<dbReference type="EMBL" id="AF361104">
    <property type="protein sequence ID" value="AAK31372.1"/>
    <property type="molecule type" value="Genomic_DNA"/>
</dbReference>
<dbReference type="EMBL" id="AF361104">
    <property type="protein sequence ID" value="AAK31373.1"/>
    <property type="molecule type" value="Genomic_DNA"/>
</dbReference>
<dbReference type="EMBL" id="AK290559">
    <property type="protein sequence ID" value="BAF83248.1"/>
    <property type="molecule type" value="mRNA"/>
</dbReference>
<dbReference type="EMBL" id="CH471056">
    <property type="protein sequence ID" value="EAX04925.1"/>
    <property type="molecule type" value="Genomic_DNA"/>
</dbReference>
<dbReference type="EMBL" id="CH471056">
    <property type="protein sequence ID" value="EAX04926.1"/>
    <property type="molecule type" value="Genomic_DNA"/>
</dbReference>
<dbReference type="EMBL" id="CH471056">
    <property type="protein sequence ID" value="EAX04927.1"/>
    <property type="molecule type" value="Genomic_DNA"/>
</dbReference>
<dbReference type="EMBL" id="CH471056">
    <property type="protein sequence ID" value="EAX04928.1"/>
    <property type="molecule type" value="Genomic_DNA"/>
</dbReference>
<dbReference type="EMBL" id="BC098280">
    <property type="protein sequence ID" value="AAH98280.1"/>
    <property type="molecule type" value="mRNA"/>
</dbReference>
<dbReference type="EMBL" id="BC099706">
    <property type="protein sequence ID" value="AAH99706.1"/>
    <property type="molecule type" value="mRNA"/>
</dbReference>
<dbReference type="EMBL" id="BC099720">
    <property type="protein sequence ID" value="AAH99720.1"/>
    <property type="molecule type" value="mRNA"/>
</dbReference>
<dbReference type="EMBL" id="BC101935">
    <property type="protein sequence ID" value="AAI01936.1"/>
    <property type="molecule type" value="mRNA"/>
</dbReference>
<dbReference type="EMBL" id="J00128">
    <property type="protein sequence ID" value="AAA52427.1"/>
    <property type="molecule type" value="mRNA"/>
</dbReference>
<dbReference type="EMBL" id="J00127">
    <property type="protein sequence ID" value="AAA52426.1"/>
    <property type="molecule type" value="mRNA"/>
</dbReference>
<dbReference type="EMBL" id="K02272">
    <property type="protein sequence ID" value="AAA52428.1"/>
    <property type="molecule type" value="mRNA"/>
</dbReference>
<dbReference type="EMBL" id="M26878">
    <property type="protein sequence ID" value="AAA52444.1"/>
    <property type="molecule type" value="mRNA"/>
</dbReference>
<dbReference type="CCDS" id="CCDS3787.1">
    <molecule id="P02671-1"/>
</dbReference>
<dbReference type="CCDS" id="CCDS47152.1">
    <molecule id="P02671-2"/>
</dbReference>
<dbReference type="PIR" id="A93956">
    <property type="entry name" value="FGHUA"/>
</dbReference>
<dbReference type="PIR" id="D44234">
    <property type="entry name" value="D44234"/>
</dbReference>
<dbReference type="RefSeq" id="NP_000499.1">
    <molecule id="P02671-1"/>
    <property type="nucleotide sequence ID" value="NM_000508.5"/>
</dbReference>
<dbReference type="RefSeq" id="NP_068657.1">
    <molecule id="P02671-2"/>
    <property type="nucleotide sequence ID" value="NM_021871.4"/>
</dbReference>
<dbReference type="PDB" id="1BBR">
    <property type="method" value="X-ray"/>
    <property type="resolution" value="2.30 A"/>
    <property type="chains" value="F/G/I=26-35"/>
</dbReference>
<dbReference type="PDB" id="1DM4">
    <property type="method" value="X-ray"/>
    <property type="resolution" value="2.50 A"/>
    <property type="chains" value="C=26-35"/>
</dbReference>
<dbReference type="PDB" id="1FPH">
    <property type="method" value="X-ray"/>
    <property type="resolution" value="2.50 A"/>
    <property type="chains" value="F=26-35"/>
</dbReference>
<dbReference type="PDB" id="1FZA">
    <property type="method" value="X-ray"/>
    <property type="resolution" value="2.90 A"/>
    <property type="chains" value="A/D=130-216"/>
</dbReference>
<dbReference type="PDB" id="1FZB">
    <property type="method" value="X-ray"/>
    <property type="resolution" value="2.90 A"/>
    <property type="chains" value="A/D=130-216"/>
</dbReference>
<dbReference type="PDB" id="1FZC">
    <property type="method" value="X-ray"/>
    <property type="resolution" value="2.30 A"/>
    <property type="chains" value="A/D=130-216"/>
</dbReference>
<dbReference type="PDB" id="1FZD">
    <property type="method" value="X-ray"/>
    <property type="resolution" value="2.10 A"/>
    <property type="chains" value="A/B/C/D/E/F/G/H=666-866"/>
</dbReference>
<dbReference type="PDB" id="1FZE">
    <property type="method" value="X-ray"/>
    <property type="resolution" value="3.00 A"/>
    <property type="chains" value="A/D=130-216"/>
</dbReference>
<dbReference type="PDB" id="1FZF">
    <property type="method" value="X-ray"/>
    <property type="resolution" value="2.70 A"/>
    <property type="chains" value="A/D=130-216"/>
</dbReference>
<dbReference type="PDB" id="1FZG">
    <property type="method" value="X-ray"/>
    <property type="resolution" value="2.50 A"/>
    <property type="chains" value="A/D=130-216"/>
</dbReference>
<dbReference type="PDB" id="1LT9">
    <property type="method" value="X-ray"/>
    <property type="resolution" value="2.80 A"/>
    <property type="chains" value="A/D=145-210"/>
</dbReference>
<dbReference type="PDB" id="1LTJ">
    <property type="method" value="X-ray"/>
    <property type="resolution" value="2.80 A"/>
    <property type="chains" value="A/D=145-210"/>
</dbReference>
<dbReference type="PDB" id="1N86">
    <property type="method" value="X-ray"/>
    <property type="resolution" value="3.20 A"/>
    <property type="chains" value="A/D=130-216"/>
</dbReference>
<dbReference type="PDB" id="1N8E">
    <property type="method" value="X-ray"/>
    <property type="resolution" value="4.50 A"/>
    <property type="chains" value="A/D=130-218"/>
</dbReference>
<dbReference type="PDB" id="1RE3">
    <property type="method" value="X-ray"/>
    <property type="resolution" value="2.45 A"/>
    <property type="chains" value="A/D=145-210"/>
</dbReference>
<dbReference type="PDB" id="1RE4">
    <property type="method" value="X-ray"/>
    <property type="resolution" value="2.70 A"/>
    <property type="chains" value="A/D=145-210"/>
</dbReference>
<dbReference type="PDB" id="1RF0">
    <property type="method" value="X-ray"/>
    <property type="resolution" value="2.81 A"/>
    <property type="chains" value="A/D=145-210"/>
</dbReference>
<dbReference type="PDB" id="1RF1">
    <property type="method" value="X-ray"/>
    <property type="resolution" value="2.53 A"/>
    <property type="chains" value="A/D=145-210"/>
</dbReference>
<dbReference type="PDB" id="1YCP">
    <property type="method" value="X-ray"/>
    <property type="resolution" value="2.50 A"/>
    <property type="chains" value="F/N=20-42"/>
</dbReference>
<dbReference type="PDB" id="2A45">
    <property type="method" value="X-ray"/>
    <property type="resolution" value="3.65 A"/>
    <property type="chains" value="G/J=36-92"/>
</dbReference>
<dbReference type="PDB" id="2FFD">
    <property type="method" value="X-ray"/>
    <property type="resolution" value="2.89 A"/>
    <property type="chains" value="A/D=145-210"/>
</dbReference>
<dbReference type="PDB" id="2H43">
    <property type="method" value="X-ray"/>
    <property type="resolution" value="2.70 A"/>
    <property type="chains" value="A/D=130-216"/>
</dbReference>
<dbReference type="PDB" id="2HLO">
    <property type="method" value="X-ray"/>
    <property type="resolution" value="2.60 A"/>
    <property type="chains" value="A/D=130-216"/>
</dbReference>
<dbReference type="PDB" id="2HOD">
    <property type="method" value="X-ray"/>
    <property type="resolution" value="2.90 A"/>
    <property type="chains" value="A/D/G/J=130-216"/>
</dbReference>
<dbReference type="PDB" id="2HPC">
    <property type="method" value="X-ray"/>
    <property type="resolution" value="2.90 A"/>
    <property type="chains" value="A/D/G/J=130-216"/>
</dbReference>
<dbReference type="PDB" id="2OYH">
    <property type="method" value="X-ray"/>
    <property type="resolution" value="2.40 A"/>
    <property type="chains" value="A/D=145-210"/>
</dbReference>
<dbReference type="PDB" id="2OYI">
    <property type="method" value="X-ray"/>
    <property type="resolution" value="2.70 A"/>
    <property type="chains" value="A/D=145-210"/>
</dbReference>
<dbReference type="PDB" id="2Q9I">
    <property type="method" value="X-ray"/>
    <property type="resolution" value="2.80 A"/>
    <property type="chains" value="A/D=130-216"/>
</dbReference>
<dbReference type="PDB" id="2XNX">
    <property type="method" value="X-ray"/>
    <property type="resolution" value="3.30 A"/>
    <property type="chains" value="A/D/G/J=130-216"/>
</dbReference>
<dbReference type="PDB" id="2XNY">
    <property type="method" value="X-ray"/>
    <property type="resolution" value="7.50 A"/>
    <property type="chains" value="A/D=130-216"/>
</dbReference>
<dbReference type="PDB" id="2Z4E">
    <property type="method" value="X-ray"/>
    <property type="resolution" value="2.70 A"/>
    <property type="chains" value="A/D=130-216"/>
</dbReference>
<dbReference type="PDB" id="3AT0">
    <property type="method" value="X-ray"/>
    <property type="resolution" value="2.50 A"/>
    <property type="chains" value="B=332-347"/>
</dbReference>
<dbReference type="PDB" id="3BVH">
    <property type="method" value="X-ray"/>
    <property type="resolution" value="2.60 A"/>
    <property type="chains" value="A/D=148-209"/>
</dbReference>
<dbReference type="PDB" id="3E1I">
    <property type="method" value="X-ray"/>
    <property type="resolution" value="2.30 A"/>
    <property type="chains" value="A/D=130-216"/>
</dbReference>
<dbReference type="PDB" id="3GHG">
    <property type="method" value="X-ray"/>
    <property type="resolution" value="2.90 A"/>
    <property type="chains" value="A/D/G/J=20-581"/>
</dbReference>
<dbReference type="PDB" id="3H32">
    <property type="method" value="X-ray"/>
    <property type="resolution" value="3.60 A"/>
    <property type="chains" value="A/D=20-216"/>
</dbReference>
<dbReference type="PDB" id="3HUS">
    <property type="method" value="X-ray"/>
    <property type="resolution" value="3.04 A"/>
    <property type="chains" value="A/D=145-210"/>
</dbReference>
<dbReference type="PDB" id="4F27">
    <property type="method" value="X-ray"/>
    <property type="resolution" value="1.92 A"/>
    <property type="chains" value="Q=336-347"/>
</dbReference>
<dbReference type="PDB" id="5CFA">
    <property type="method" value="X-ray"/>
    <property type="resolution" value="1.45 A"/>
    <property type="chains" value="C/D=580-594"/>
</dbReference>
<dbReference type="PDBsum" id="1BBR"/>
<dbReference type="PDBsum" id="1DM4"/>
<dbReference type="PDBsum" id="1FPH"/>
<dbReference type="PDBsum" id="1FZA"/>
<dbReference type="PDBsum" id="1FZB"/>
<dbReference type="PDBsum" id="1FZC"/>
<dbReference type="PDBsum" id="1FZD"/>
<dbReference type="PDBsum" id="1FZE"/>
<dbReference type="PDBsum" id="1FZF"/>
<dbReference type="PDBsum" id="1FZG"/>
<dbReference type="PDBsum" id="1LT9"/>
<dbReference type="PDBsum" id="1LTJ"/>
<dbReference type="PDBsum" id="1N86"/>
<dbReference type="PDBsum" id="1N8E"/>
<dbReference type="PDBsum" id="1RE3"/>
<dbReference type="PDBsum" id="1RE4"/>
<dbReference type="PDBsum" id="1RF0"/>
<dbReference type="PDBsum" id="1RF1"/>
<dbReference type="PDBsum" id="1YCP"/>
<dbReference type="PDBsum" id="2A45"/>
<dbReference type="PDBsum" id="2FFD"/>
<dbReference type="PDBsum" id="2H43"/>
<dbReference type="PDBsum" id="2HLO"/>
<dbReference type="PDBsum" id="2HOD"/>
<dbReference type="PDBsum" id="2HPC"/>
<dbReference type="PDBsum" id="2OYH"/>
<dbReference type="PDBsum" id="2OYI"/>
<dbReference type="PDBsum" id="2Q9I"/>
<dbReference type="PDBsum" id="2XNX"/>
<dbReference type="PDBsum" id="2XNY"/>
<dbReference type="PDBsum" id="2Z4E"/>
<dbReference type="PDBsum" id="3AT0"/>
<dbReference type="PDBsum" id="3BVH"/>
<dbReference type="PDBsum" id="3E1I"/>
<dbReference type="PDBsum" id="3GHG"/>
<dbReference type="PDBsum" id="3H32"/>
<dbReference type="PDBsum" id="3HUS"/>
<dbReference type="PDBsum" id="4F27"/>
<dbReference type="PDBsum" id="5CFA"/>
<dbReference type="SMR" id="P02671"/>
<dbReference type="BioGRID" id="108534">
    <property type="interactions" value="106"/>
</dbReference>
<dbReference type="ComplexPortal" id="CPX-1922">
    <property type="entry name" value="Fibrinogen complex"/>
</dbReference>
<dbReference type="ComplexPortal" id="CPX-6225">
    <property type="entry name" value="Fibrin complex"/>
</dbReference>
<dbReference type="CORUM" id="P02671"/>
<dbReference type="DIP" id="DIP-29643N"/>
<dbReference type="FunCoup" id="P02671">
    <property type="interactions" value="422"/>
</dbReference>
<dbReference type="IntAct" id="P02671">
    <property type="interactions" value="73"/>
</dbReference>
<dbReference type="MINT" id="P02671"/>
<dbReference type="STRING" id="9606.ENSP00000498441"/>
<dbReference type="ChEMBL" id="CHEMBL2364709"/>
<dbReference type="DrugBank" id="DB04919">
    <property type="generic name" value="Alfimeprase"/>
</dbReference>
<dbReference type="DrugBank" id="DB00009">
    <property type="generic name" value="Alteplase"/>
</dbReference>
<dbReference type="DrugBank" id="DB05099">
    <property type="generic name" value="Ancrod"/>
</dbReference>
<dbReference type="DrugBank" id="DB00029">
    <property type="generic name" value="Anistreplase"/>
</dbReference>
<dbReference type="DrugBank" id="DB13151">
    <property type="generic name" value="Anti-inhibitor coagulant complex"/>
</dbReference>
<dbReference type="DrugBank" id="DB05675">
    <property type="generic name" value="EP-2104R"/>
</dbReference>
<dbReference type="DrugBank" id="DB11571">
    <property type="generic name" value="Human thrombin"/>
</dbReference>
<dbReference type="DrugBank" id="DB06245">
    <property type="generic name" value="Lanoteplase"/>
</dbReference>
<dbReference type="DrugBank" id="DB11311">
    <property type="generic name" value="Prothrombin"/>
</dbReference>
<dbReference type="DrugBank" id="DB00015">
    <property type="generic name" value="Reteplase"/>
</dbReference>
<dbReference type="DrugBank" id="DB00364">
    <property type="generic name" value="Sucralfate"/>
</dbReference>
<dbReference type="DrugBank" id="DB11300">
    <property type="generic name" value="Thrombin"/>
</dbReference>
<dbReference type="DrugBank" id="DB11572">
    <property type="generic name" value="Thrombin alfa"/>
</dbReference>
<dbReference type="DrugBank" id="DB01593">
    <property type="generic name" value="Zinc"/>
</dbReference>
<dbReference type="DrugBank" id="DB14487">
    <property type="generic name" value="Zinc acetate"/>
</dbReference>
<dbReference type="DrugBank" id="DB14533">
    <property type="generic name" value="Zinc chloride"/>
</dbReference>
<dbReference type="DrugBank" id="DB14548">
    <property type="generic name" value="Zinc sulfate, unspecified form"/>
</dbReference>
<dbReference type="UniLectin" id="P02671"/>
<dbReference type="CarbonylDB" id="P02671"/>
<dbReference type="GlyConnect" id="1238">
    <property type="glycosylation" value="3 N-Linked glycans (1 site)"/>
</dbReference>
<dbReference type="GlyConnect" id="157">
    <property type="glycosylation" value="4 N-Linked glycans"/>
</dbReference>
<dbReference type="GlyCosmos" id="P02671">
    <property type="glycosylation" value="23 sites, 14 glycans"/>
</dbReference>
<dbReference type="GlyGen" id="P02671">
    <property type="glycosylation" value="29 sites, 14 N-linked glycans (2 sites), 6 O-linked glycans (27 sites)"/>
</dbReference>
<dbReference type="iPTMnet" id="P02671"/>
<dbReference type="PhosphoSitePlus" id="P02671"/>
<dbReference type="SwissPalm" id="P02671"/>
<dbReference type="BioMuta" id="FGA"/>
<dbReference type="DMDM" id="1706799"/>
<dbReference type="OGP" id="P02671"/>
<dbReference type="CPTAC" id="non-CPTAC-1117"/>
<dbReference type="CPTAC" id="non-CPTAC-1118"/>
<dbReference type="jPOST" id="P02671"/>
<dbReference type="MassIVE" id="P02671"/>
<dbReference type="PaxDb" id="9606-ENSP00000306361"/>
<dbReference type="PeptideAtlas" id="P02671"/>
<dbReference type="ProteomicsDB" id="51542">
    <molecule id="P02671-1"/>
</dbReference>
<dbReference type="ProteomicsDB" id="51543">
    <molecule id="P02671-2"/>
</dbReference>
<dbReference type="Pumba" id="P02671"/>
<dbReference type="ABCD" id="P02671">
    <property type="antibodies" value="6 sequenced antibodies"/>
</dbReference>
<dbReference type="Antibodypedia" id="3395">
    <property type="antibodies" value="1117 antibodies from 45 providers"/>
</dbReference>
<dbReference type="DNASU" id="2243"/>
<dbReference type="Ensembl" id="ENST00000403106.8">
    <molecule id="P02671-2"/>
    <property type="protein sequence ID" value="ENSP00000385981.3"/>
    <property type="gene ID" value="ENSG00000171560.18"/>
</dbReference>
<dbReference type="Ensembl" id="ENST00000651975.2">
    <molecule id="P02671-1"/>
    <property type="protein sequence ID" value="ENSP00000498441.1"/>
    <property type="gene ID" value="ENSG00000171560.18"/>
</dbReference>
<dbReference type="GeneID" id="2243"/>
<dbReference type="KEGG" id="hsa:2243"/>
<dbReference type="MANE-Select" id="ENST00000403106.8">
    <molecule id="P02671-2"/>
    <property type="protein sequence ID" value="ENSP00000385981.3"/>
    <property type="RefSeq nucleotide sequence ID" value="NM_021871.4"/>
    <property type="RefSeq protein sequence ID" value="NP_068657.1"/>
</dbReference>
<dbReference type="UCSC" id="uc003iod.2">
    <molecule id="P02671-1"/>
    <property type="organism name" value="human"/>
</dbReference>
<dbReference type="AGR" id="HGNC:3661"/>
<dbReference type="CTD" id="2243"/>
<dbReference type="DisGeNET" id="2243"/>
<dbReference type="GeneCards" id="FGA"/>
<dbReference type="HGNC" id="HGNC:3661">
    <property type="gene designation" value="FGA"/>
</dbReference>
<dbReference type="HPA" id="ENSG00000171560">
    <property type="expression patterns" value="Tissue enriched (liver)"/>
</dbReference>
<dbReference type="MalaCards" id="FGA"/>
<dbReference type="MIM" id="105200">
    <property type="type" value="phenotype"/>
</dbReference>
<dbReference type="MIM" id="134820">
    <property type="type" value="gene"/>
</dbReference>
<dbReference type="MIM" id="202400">
    <property type="type" value="phenotype"/>
</dbReference>
<dbReference type="MIM" id="616004">
    <property type="type" value="phenotype"/>
</dbReference>
<dbReference type="neXtProt" id="NX_P02671"/>
<dbReference type="OpenTargets" id="ENSG00000171560"/>
<dbReference type="Orphanet" id="93562">
    <property type="disease" value="AFib amyloidosis"/>
</dbReference>
<dbReference type="Orphanet" id="98880">
    <property type="disease" value="Familial afibrinogenemia"/>
</dbReference>
<dbReference type="Orphanet" id="98881">
    <property type="disease" value="Familial dysfibrinogenemia"/>
</dbReference>
<dbReference type="Orphanet" id="248408">
    <property type="disease" value="Familial hypodysfibrinogenemia"/>
</dbReference>
<dbReference type="Orphanet" id="101041">
    <property type="disease" value="Familial hypofibrinogenemia"/>
</dbReference>
<dbReference type="PharmGKB" id="PA429"/>
<dbReference type="VEuPathDB" id="HostDB:ENSG00000171560"/>
<dbReference type="eggNOG" id="KOG2579">
    <property type="taxonomic scope" value="Eukaryota"/>
</dbReference>
<dbReference type="GeneTree" id="ENSGT00940000155946"/>
<dbReference type="HOGENOM" id="CLU_013807_0_0_1"/>
<dbReference type="InParanoid" id="P02671"/>
<dbReference type="OMA" id="PRIVEHM"/>
<dbReference type="OrthoDB" id="9945370at2759"/>
<dbReference type="PAN-GO" id="P02671">
    <property type="GO annotations" value="10 GO annotations based on evolutionary models"/>
</dbReference>
<dbReference type="PhylomeDB" id="P02671"/>
<dbReference type="TreeFam" id="TF351984"/>
<dbReference type="BioCyc" id="MetaCyc:ENSG00000171560-MONOMER"/>
<dbReference type="PathwayCommons" id="P02671"/>
<dbReference type="Reactome" id="R-HSA-114608">
    <property type="pathway name" value="Platelet degranulation"/>
</dbReference>
<dbReference type="Reactome" id="R-HSA-1236974">
    <property type="pathway name" value="ER-Phagosome pathway"/>
</dbReference>
<dbReference type="Reactome" id="R-HSA-140875">
    <property type="pathway name" value="Common Pathway of Fibrin Clot Formation"/>
</dbReference>
<dbReference type="Reactome" id="R-HSA-166058">
    <property type="pathway name" value="MyD88:MAL(TIRAP) cascade initiated on plasma membrane"/>
</dbReference>
<dbReference type="Reactome" id="R-HSA-216083">
    <property type="pathway name" value="Integrin cell surface interactions"/>
</dbReference>
<dbReference type="Reactome" id="R-HSA-354192">
    <property type="pathway name" value="Integrin signaling"/>
</dbReference>
<dbReference type="Reactome" id="R-HSA-354194">
    <property type="pathway name" value="GRB2:SOS provides linkage to MAPK signaling for Integrins"/>
</dbReference>
<dbReference type="Reactome" id="R-HSA-372708">
    <property type="pathway name" value="p130Cas linkage to MAPK signaling for integrins"/>
</dbReference>
<dbReference type="Reactome" id="R-HSA-381426">
    <property type="pathway name" value="Regulation of Insulin-like Growth Factor (IGF) transport and uptake by Insulin-like Growth Factor Binding Proteins (IGFBPs)"/>
</dbReference>
<dbReference type="Reactome" id="R-HSA-5602498">
    <property type="pathway name" value="MyD88 deficiency (TLR2/4)"/>
</dbReference>
<dbReference type="Reactome" id="R-HSA-5603041">
    <property type="pathway name" value="IRAK4 deficiency (TLR2/4)"/>
</dbReference>
<dbReference type="Reactome" id="R-HSA-5674135">
    <property type="pathway name" value="MAP2K and MAPK activation"/>
</dbReference>
<dbReference type="Reactome" id="R-HSA-5686938">
    <property type="pathway name" value="Regulation of TLR by endogenous ligand"/>
</dbReference>
<dbReference type="Reactome" id="R-HSA-6802946">
    <property type="pathway name" value="Signaling by moderate kinase activity BRAF mutants"/>
</dbReference>
<dbReference type="Reactome" id="R-HSA-6802948">
    <property type="pathway name" value="Signaling by high-kinase activity BRAF mutants"/>
</dbReference>
<dbReference type="Reactome" id="R-HSA-6802952">
    <property type="pathway name" value="Signaling by BRAF and RAF1 fusions"/>
</dbReference>
<dbReference type="Reactome" id="R-HSA-6802955">
    <property type="pathway name" value="Paradoxical activation of RAF signaling by kinase inactive BRAF"/>
</dbReference>
<dbReference type="Reactome" id="R-HSA-8957275">
    <property type="pathway name" value="Post-translational protein phosphorylation"/>
</dbReference>
<dbReference type="Reactome" id="R-HSA-9649948">
    <property type="pathway name" value="Signaling downstream of RAS mutants"/>
</dbReference>
<dbReference type="Reactome" id="R-HSA-9656223">
    <property type="pathway name" value="Signaling by RAF1 mutants"/>
</dbReference>
<dbReference type="Reactome" id="R-HSA-977225">
    <property type="pathway name" value="Amyloid fiber formation"/>
</dbReference>
<dbReference type="SignaLink" id="P02671"/>
<dbReference type="SIGNOR" id="P02671"/>
<dbReference type="BioGRID-ORCS" id="2243">
    <property type="hits" value="10 hits in 1158 CRISPR screens"/>
</dbReference>
<dbReference type="ChiTaRS" id="FGA">
    <property type="organism name" value="human"/>
</dbReference>
<dbReference type="EvolutionaryTrace" id="P02671"/>
<dbReference type="GeneWiki" id="Fibrinogen_alpha_chain"/>
<dbReference type="GenomeRNAi" id="2243"/>
<dbReference type="Pharos" id="P02671">
    <property type="development level" value="Tbio"/>
</dbReference>
<dbReference type="PRO" id="PR:P02671"/>
<dbReference type="Proteomes" id="UP000005640">
    <property type="component" value="Chromosome 4"/>
</dbReference>
<dbReference type="RNAct" id="P02671">
    <property type="molecule type" value="protein"/>
</dbReference>
<dbReference type="Bgee" id="ENSG00000171560">
    <property type="expression patterns" value="Expressed in right lobe of liver and 113 other cell types or tissues"/>
</dbReference>
<dbReference type="ExpressionAtlas" id="P02671">
    <property type="expression patterns" value="baseline and differential"/>
</dbReference>
<dbReference type="GO" id="GO:0072562">
    <property type="term" value="C:blood microparticle"/>
    <property type="evidence" value="ECO:0007005"/>
    <property type="project" value="UniProtKB"/>
</dbReference>
<dbReference type="GO" id="GO:0009986">
    <property type="term" value="C:cell surface"/>
    <property type="evidence" value="ECO:0000314"/>
    <property type="project" value="BHF-UCL"/>
</dbReference>
<dbReference type="GO" id="GO:0062023">
    <property type="term" value="C:collagen-containing extracellular matrix"/>
    <property type="evidence" value="ECO:0007005"/>
    <property type="project" value="BHF-UCL"/>
</dbReference>
<dbReference type="GO" id="GO:0005783">
    <property type="term" value="C:endoplasmic reticulum"/>
    <property type="evidence" value="ECO:0000314"/>
    <property type="project" value="HPA"/>
</dbReference>
<dbReference type="GO" id="GO:0005788">
    <property type="term" value="C:endoplasmic reticulum lumen"/>
    <property type="evidence" value="ECO:0000304"/>
    <property type="project" value="Reactome"/>
</dbReference>
<dbReference type="GO" id="GO:0009897">
    <property type="term" value="C:external side of plasma membrane"/>
    <property type="evidence" value="ECO:0000314"/>
    <property type="project" value="BHF-UCL"/>
</dbReference>
<dbReference type="GO" id="GO:0070062">
    <property type="term" value="C:extracellular exosome"/>
    <property type="evidence" value="ECO:0007005"/>
    <property type="project" value="UniProtKB"/>
</dbReference>
<dbReference type="GO" id="GO:0005576">
    <property type="term" value="C:extracellular region"/>
    <property type="evidence" value="ECO:0000304"/>
    <property type="project" value="Reactome"/>
</dbReference>
<dbReference type="GO" id="GO:0005615">
    <property type="term" value="C:extracellular space"/>
    <property type="evidence" value="ECO:0000314"/>
    <property type="project" value="BHF-UCL"/>
</dbReference>
<dbReference type="GO" id="GO:1903561">
    <property type="term" value="C:extracellular vesicle"/>
    <property type="evidence" value="ECO:0007005"/>
    <property type="project" value="UniProtKB"/>
</dbReference>
<dbReference type="GO" id="GO:0005577">
    <property type="term" value="C:fibrinogen complex"/>
    <property type="evidence" value="ECO:0000314"/>
    <property type="project" value="UniProtKB"/>
</dbReference>
<dbReference type="GO" id="GO:0005886">
    <property type="term" value="C:plasma membrane"/>
    <property type="evidence" value="ECO:0000304"/>
    <property type="project" value="Reactome"/>
</dbReference>
<dbReference type="GO" id="GO:0031091">
    <property type="term" value="C:platelet alpha granule"/>
    <property type="evidence" value="ECO:0000314"/>
    <property type="project" value="BHF-UCL"/>
</dbReference>
<dbReference type="GO" id="GO:0031093">
    <property type="term" value="C:platelet alpha granule lumen"/>
    <property type="evidence" value="ECO:0000304"/>
    <property type="project" value="Reactome"/>
</dbReference>
<dbReference type="GO" id="GO:0005201">
    <property type="term" value="F:extracellular matrix structural constituent"/>
    <property type="evidence" value="ECO:0007005"/>
    <property type="project" value="BHF-UCL"/>
</dbReference>
<dbReference type="GO" id="GO:0046872">
    <property type="term" value="F:metal ion binding"/>
    <property type="evidence" value="ECO:0007669"/>
    <property type="project" value="UniProtKB-KW"/>
</dbReference>
<dbReference type="GO" id="GO:0030674">
    <property type="term" value="F:protein-macromolecule adaptor activity"/>
    <property type="evidence" value="ECO:0000318"/>
    <property type="project" value="GO_Central"/>
</dbReference>
<dbReference type="GO" id="GO:0005102">
    <property type="term" value="F:signaling receptor binding"/>
    <property type="evidence" value="ECO:0007669"/>
    <property type="project" value="InterPro"/>
</dbReference>
<dbReference type="GO" id="GO:0005198">
    <property type="term" value="F:structural molecule activity"/>
    <property type="evidence" value="ECO:0000314"/>
    <property type="project" value="BHF-UCL"/>
</dbReference>
<dbReference type="GO" id="GO:0002250">
    <property type="term" value="P:adaptive immune response"/>
    <property type="evidence" value="ECO:0007669"/>
    <property type="project" value="UniProtKB-KW"/>
</dbReference>
<dbReference type="GO" id="GO:0072377">
    <property type="term" value="P:blood coagulation, common pathway"/>
    <property type="evidence" value="ECO:0000315"/>
    <property type="project" value="BHF-UCL"/>
</dbReference>
<dbReference type="GO" id="GO:0072378">
    <property type="term" value="P:blood coagulation, fibrin clot formation"/>
    <property type="evidence" value="ECO:0000314"/>
    <property type="project" value="UniProtKB"/>
</dbReference>
<dbReference type="GO" id="GO:0007160">
    <property type="term" value="P:cell-matrix adhesion"/>
    <property type="evidence" value="ECO:0000314"/>
    <property type="project" value="BHF-UCL"/>
</dbReference>
<dbReference type="GO" id="GO:0042730">
    <property type="term" value="P:fibrinolysis"/>
    <property type="evidence" value="ECO:0000314"/>
    <property type="project" value="UniProtKB"/>
</dbReference>
<dbReference type="GO" id="GO:0043152">
    <property type="term" value="P:induction of bacterial agglutination"/>
    <property type="evidence" value="ECO:0000314"/>
    <property type="project" value="CACAO"/>
</dbReference>
<dbReference type="GO" id="GO:0045087">
    <property type="term" value="P:innate immune response"/>
    <property type="evidence" value="ECO:0007669"/>
    <property type="project" value="UniProtKB-KW"/>
</dbReference>
<dbReference type="GO" id="GO:2000352">
    <property type="term" value="P:negative regulation of endothelial cell apoptotic process"/>
    <property type="evidence" value="ECO:0000314"/>
    <property type="project" value="BHF-UCL"/>
</dbReference>
<dbReference type="GO" id="GO:1902042">
    <property type="term" value="P:negative regulation of extrinsic apoptotic signaling pathway via death domain receptors"/>
    <property type="evidence" value="ECO:0000314"/>
    <property type="project" value="BHF-UCL"/>
</dbReference>
<dbReference type="GO" id="GO:0031639">
    <property type="term" value="P:plasminogen activation"/>
    <property type="evidence" value="ECO:0000314"/>
    <property type="project" value="UniProtKB"/>
</dbReference>
<dbReference type="GO" id="GO:0070527">
    <property type="term" value="P:platelet aggregation"/>
    <property type="evidence" value="ECO:0000314"/>
    <property type="project" value="BHF-UCL"/>
</dbReference>
<dbReference type="GO" id="GO:0070374">
    <property type="term" value="P:positive regulation of ERK1 and ERK2 cascade"/>
    <property type="evidence" value="ECO:0000314"/>
    <property type="project" value="BHF-UCL"/>
</dbReference>
<dbReference type="GO" id="GO:0045921">
    <property type="term" value="P:positive regulation of exocytosis"/>
    <property type="evidence" value="ECO:0000314"/>
    <property type="project" value="BHF-UCL"/>
</dbReference>
<dbReference type="GO" id="GO:0034116">
    <property type="term" value="P:positive regulation of heterotypic cell-cell adhesion"/>
    <property type="evidence" value="ECO:0000314"/>
    <property type="project" value="BHF-UCL"/>
</dbReference>
<dbReference type="GO" id="GO:0090277">
    <property type="term" value="P:positive regulation of peptide hormone secretion"/>
    <property type="evidence" value="ECO:0000314"/>
    <property type="project" value="BHF-UCL"/>
</dbReference>
<dbReference type="GO" id="GO:0050714">
    <property type="term" value="P:positive regulation of protein secretion"/>
    <property type="evidence" value="ECO:0000314"/>
    <property type="project" value="BHF-UCL"/>
</dbReference>
<dbReference type="GO" id="GO:1900026">
    <property type="term" value="P:positive regulation of substrate adhesion-dependent cell spreading"/>
    <property type="evidence" value="ECO:0000303"/>
    <property type="project" value="BHF-UCL"/>
</dbReference>
<dbReference type="GO" id="GO:0045907">
    <property type="term" value="P:positive regulation of vasoconstriction"/>
    <property type="evidence" value="ECO:0000314"/>
    <property type="project" value="BHF-UCL"/>
</dbReference>
<dbReference type="GO" id="GO:0051258">
    <property type="term" value="P:protein polymerization"/>
    <property type="evidence" value="ECO:0000314"/>
    <property type="project" value="BHF-UCL"/>
</dbReference>
<dbReference type="GO" id="GO:0065003">
    <property type="term" value="P:protein-containing complex assembly"/>
    <property type="evidence" value="ECO:0000314"/>
    <property type="project" value="BHF-UCL"/>
</dbReference>
<dbReference type="GO" id="GO:0051592">
    <property type="term" value="P:response to calcium ion"/>
    <property type="evidence" value="ECO:0000314"/>
    <property type="project" value="BHF-UCL"/>
</dbReference>
<dbReference type="CDD" id="cd00087">
    <property type="entry name" value="FReD"/>
    <property type="match status" value="1"/>
</dbReference>
<dbReference type="FunFam" id="1.20.5.50:FF:000006">
    <property type="entry name" value="Fibrinogen alpha chain"/>
    <property type="match status" value="1"/>
</dbReference>
<dbReference type="FunFam" id="3.90.215.10:FF:000009">
    <property type="entry name" value="Fibrinogen alpha chain"/>
    <property type="match status" value="1"/>
</dbReference>
<dbReference type="FunFam" id="4.10.530.10:FF:000002">
    <property type="entry name" value="Fibrinogen gamma chain"/>
    <property type="match status" value="1"/>
</dbReference>
<dbReference type="Gene3D" id="1.20.5.50">
    <property type="match status" value="1"/>
</dbReference>
<dbReference type="Gene3D" id="3.90.215.10">
    <property type="entry name" value="Gamma Fibrinogen, chain A, domain 1"/>
    <property type="match status" value="1"/>
</dbReference>
<dbReference type="Gene3D" id="4.10.530.10">
    <property type="entry name" value="Gamma-fibrinogen Carboxyl Terminal Fragment, domain 2"/>
    <property type="match status" value="1"/>
</dbReference>
<dbReference type="InterPro" id="IPR037579">
    <property type="entry name" value="FIB_ANG-like"/>
</dbReference>
<dbReference type="InterPro" id="IPR036056">
    <property type="entry name" value="Fibrinogen-like_C"/>
</dbReference>
<dbReference type="InterPro" id="IPR014716">
    <property type="entry name" value="Fibrinogen_a/b/g_C_1"/>
</dbReference>
<dbReference type="InterPro" id="IPR002181">
    <property type="entry name" value="Fibrinogen_a/b/g_C_dom"/>
</dbReference>
<dbReference type="InterPro" id="IPR012290">
    <property type="entry name" value="Fibrinogen_a/b/g_coil_dom"/>
</dbReference>
<dbReference type="InterPro" id="IPR021996">
    <property type="entry name" value="Fibrinogen_aC"/>
</dbReference>
<dbReference type="InterPro" id="IPR020837">
    <property type="entry name" value="Fibrinogen_CS"/>
</dbReference>
<dbReference type="NCBIfam" id="NF040941">
    <property type="entry name" value="GGGWT_bact"/>
    <property type="match status" value="1"/>
</dbReference>
<dbReference type="PANTHER" id="PTHR47221">
    <property type="entry name" value="FIBRINOGEN ALPHA CHAIN"/>
    <property type="match status" value="1"/>
</dbReference>
<dbReference type="PANTHER" id="PTHR47221:SF3">
    <property type="entry name" value="FIBRINOGEN ALPHA CHAIN"/>
    <property type="match status" value="1"/>
</dbReference>
<dbReference type="Pfam" id="PF08702">
    <property type="entry name" value="Fib_alpha"/>
    <property type="match status" value="1"/>
</dbReference>
<dbReference type="Pfam" id="PF12160">
    <property type="entry name" value="Fibrinogen_aC"/>
    <property type="match status" value="1"/>
</dbReference>
<dbReference type="Pfam" id="PF00147">
    <property type="entry name" value="Fibrinogen_C"/>
    <property type="match status" value="1"/>
</dbReference>
<dbReference type="SMART" id="SM00186">
    <property type="entry name" value="FBG"/>
    <property type="match status" value="1"/>
</dbReference>
<dbReference type="SMART" id="SM01212">
    <property type="entry name" value="Fib_alpha"/>
    <property type="match status" value="1"/>
</dbReference>
<dbReference type="SUPFAM" id="SSF56496">
    <property type="entry name" value="Fibrinogen C-terminal domain-like"/>
    <property type="match status" value="1"/>
</dbReference>
<dbReference type="SUPFAM" id="SSF58010">
    <property type="entry name" value="Fibrinogen coiled-coil and central regions"/>
    <property type="match status" value="1"/>
</dbReference>
<dbReference type="PROSITE" id="PS00514">
    <property type="entry name" value="FIBRINOGEN_C_1"/>
    <property type="match status" value="1"/>
</dbReference>
<dbReference type="PROSITE" id="PS51406">
    <property type="entry name" value="FIBRINOGEN_C_2"/>
    <property type="match status" value="1"/>
</dbReference>
<keyword id="KW-0002">3D-structure</keyword>
<keyword id="KW-1064">Adaptive immunity</keyword>
<keyword id="KW-0025">Alternative splicing</keyword>
<keyword id="KW-0034">Amyloid</keyword>
<keyword id="KW-1008">Amyloidosis</keyword>
<keyword id="KW-0094">Blood coagulation</keyword>
<keyword id="KW-0106">Calcium</keyword>
<keyword id="KW-0175">Coiled coil</keyword>
<keyword id="KW-0903">Direct protein sequencing</keyword>
<keyword id="KW-0225">Disease variant</keyword>
<keyword id="KW-1015">Disulfide bond</keyword>
<keyword id="KW-0325">Glycoprotein</keyword>
<keyword id="KW-0356">Hemostasis</keyword>
<keyword id="KW-0379">Hydroxylation</keyword>
<keyword id="KW-0391">Immunity</keyword>
<keyword id="KW-0399">Innate immunity</keyword>
<keyword id="KW-1017">Isopeptide bond</keyword>
<keyword id="KW-0479">Metal-binding</keyword>
<keyword id="KW-0597">Phosphoprotein</keyword>
<keyword id="KW-1267">Proteomics identification</keyword>
<keyword id="KW-1185">Reference proteome</keyword>
<keyword id="KW-0964">Secreted</keyword>
<keyword id="KW-0732">Signal</keyword>
<proteinExistence type="evidence at protein level"/>
<organism>
    <name type="scientific">Homo sapiens</name>
    <name type="common">Human</name>
    <dbReference type="NCBI Taxonomy" id="9606"/>
    <lineage>
        <taxon>Eukaryota</taxon>
        <taxon>Metazoa</taxon>
        <taxon>Chordata</taxon>
        <taxon>Craniata</taxon>
        <taxon>Vertebrata</taxon>
        <taxon>Euteleostomi</taxon>
        <taxon>Mammalia</taxon>
        <taxon>Eutheria</taxon>
        <taxon>Euarchontoglires</taxon>
        <taxon>Primates</taxon>
        <taxon>Haplorrhini</taxon>
        <taxon>Catarrhini</taxon>
        <taxon>Hominidae</taxon>
        <taxon>Homo</taxon>
    </lineage>
</organism>
<protein>
    <recommendedName>
        <fullName>Fibrinogen alpha chain</fullName>
    </recommendedName>
    <component>
        <recommendedName>
            <fullName>Fibrinopeptide A</fullName>
        </recommendedName>
    </component>
    <component>
        <recommendedName>
            <fullName>Fibrinogen alpha chain</fullName>
        </recommendedName>
    </component>
</protein>
<sequence>MFSMRIVCLVLSVVGTAWTADSGEGDFLAEGGGVRGPRVVERHQSACKDSDWPFCSDEDWNYKCPSGCRMKGLIDEVNQDFTNRINKLKNSLFEYQKNNKDSHSLTTNIMEILRGDFSSANNRDNTYNRVSEDLRSRIEVLKRKVIEKVQHIQLLQKNVRAQLVDMKRLEVDIDIKIRSCRGSCSRALAREVDLKDYEDQQKQLEQVIAKDLLPSRDRQHLPLIKMKPVPDLVPGNFKSQLQKVPPEWKALTDMPQMRMELERPGGNEITRGGSTSYGTGSETESPRNPSSAGSWNSGSSGPGSTGNRNPGSSGTGGTATWKPGSSGPGSTGSWNSGSSGTGSTGNQNPGSPRPGSTGTWNPGSSERGSAGHWTSESSVSGSTGQWHSESGSFRPDSPGSGNARPNNPDWGTFEEVSGNVSPGTRREYHTEKLVTSKGDKELRTGKEKVTSGSTTTTRRSCSKTVTKTVIGPDGHKEVTKEVVTSEDGSDCPEAMDLGTLSGIGTLDGFRHRHPDEAAFFDTASTGKTFPGFFSPMLGEFVSETESRGSESGIFTNTKESSSHHPGIAEFPSRGKSSSYSKQFTSSTSYNRGDSTFESKSYKMADEAGSEADHEGTHSTKRGHAKSRPVRDCDDVLQTHPSGTQSGIFNIKLPGSSKIFSVYCDQETSLGGWLLIQQRMDGSLNFNRTWQDYKRGFGSLNDEGEGEFWLGNDYLHLLTQRGSVLRVELEDWAGNEAYAEYHFRVGSEAEGYALQVSSYEGTAGDALIEGSVEEGAEYTSHNNMQFSTFDRDADQWEENCAEVYGGGWWYNNCQAANLNGIYYPGGSYDPRNNSPYEIENGVVWVSFRGADYSLRAVRMKIRPLVTQ</sequence>
<feature type="signal peptide" evidence="23 34 35">
    <location>
        <begin position="1"/>
        <end position="19"/>
    </location>
</feature>
<feature type="peptide" id="PRO_0000009021" description="Fibrinopeptide A">
    <location>
        <begin position="20"/>
        <end position="35"/>
    </location>
</feature>
<feature type="chain" id="PRO_0000009022" description="Fibrinogen alpha chain">
    <location>
        <begin position="36"/>
        <end position="866"/>
    </location>
</feature>
<feature type="domain" description="Fibrinogen C-terminal" evidence="4">
    <location>
        <begin position="623"/>
        <end position="864"/>
    </location>
</feature>
<feature type="region of interest" description="Alpha-chain polymerization, binding distal domain of another fibrin gamma chain">
    <location>
        <begin position="36"/>
        <end position="38"/>
    </location>
</feature>
<feature type="region of interest" description="Disordered" evidence="5">
    <location>
        <begin position="262"/>
        <end position="460"/>
    </location>
</feature>
<feature type="region of interest" description="Disordered" evidence="5">
    <location>
        <begin position="543"/>
        <end position="638"/>
    </location>
</feature>
<feature type="coiled-coil region" evidence="41">
    <location>
        <begin position="68"/>
        <end position="631"/>
    </location>
</feature>
<feature type="compositionally biased region" description="Low complexity" evidence="5">
    <location>
        <begin position="270"/>
        <end position="299"/>
    </location>
</feature>
<feature type="compositionally biased region" description="Polar residues" evidence="5">
    <location>
        <begin position="354"/>
        <end position="391"/>
    </location>
</feature>
<feature type="compositionally biased region" description="Basic and acidic residues" evidence="5">
    <location>
        <begin position="424"/>
        <end position="449"/>
    </location>
</feature>
<feature type="compositionally biased region" description="Low complexity" evidence="5">
    <location>
        <begin position="450"/>
        <end position="460"/>
    </location>
</feature>
<feature type="compositionally biased region" description="Low complexity" evidence="5">
    <location>
        <begin position="575"/>
        <end position="589"/>
    </location>
</feature>
<feature type="compositionally biased region" description="Basic and acidic residues" evidence="5">
    <location>
        <begin position="594"/>
        <end position="617"/>
    </location>
</feature>
<feature type="compositionally biased region" description="Basic residues" evidence="5">
    <location>
        <begin position="618"/>
        <end position="627"/>
    </location>
</feature>
<feature type="binding site" evidence="33 42">
    <location>
        <position position="791"/>
    </location>
    <ligand>
        <name>Ca(2+)</name>
        <dbReference type="ChEBI" id="CHEBI:29108"/>
    </ligand>
</feature>
<feature type="binding site" evidence="33 42">
    <location>
        <position position="793"/>
    </location>
    <ligand>
        <name>Ca(2+)</name>
        <dbReference type="ChEBI" id="CHEBI:29108"/>
    </ligand>
</feature>
<feature type="binding site" evidence="33 42">
    <location>
        <position position="795"/>
    </location>
    <ligand>
        <name>Ca(2+)</name>
        <dbReference type="ChEBI" id="CHEBI:29108"/>
    </ligand>
</feature>
<feature type="binding site" evidence="33 42">
    <location>
        <position position="797"/>
    </location>
    <ligand>
        <name>Ca(2+)</name>
        <dbReference type="ChEBI" id="CHEBI:29108"/>
    </ligand>
</feature>
<feature type="site" description="Cleavage; by thrombin; to release fibrinopeptide A">
    <location>
        <begin position="35"/>
        <end position="36"/>
    </location>
</feature>
<feature type="site" description="Cleavage; by plasmin; to break down fibrin clots">
    <location>
        <begin position="100"/>
        <end position="101"/>
    </location>
</feature>
<feature type="site" description="Cleavage; by hementin; to prevent blood coagulation">
    <location>
        <begin position="121"/>
        <end position="122"/>
    </location>
</feature>
<feature type="site" description="Cleavage; by plasmin; to break down fibrin clots">
    <location>
        <begin position="123"/>
        <end position="124"/>
    </location>
</feature>
<feature type="modified residue" description="Phosphoserine" evidence="43">
    <location>
        <position position="22"/>
    </location>
</feature>
<feature type="modified residue" description="Phosphoserine; by FAM20C" evidence="22 45">
    <location>
        <position position="45"/>
    </location>
</feature>
<feature type="modified residue" description="Phosphoserine" evidence="45">
    <location>
        <position position="50"/>
    </location>
</feature>
<feature type="modified residue" description="Phosphoserine; by FAM20C" evidence="22">
    <location>
        <position position="56"/>
    </location>
</feature>
<feature type="modified residue" description="Phosphoserine" evidence="45">
    <location>
        <position position="281"/>
    </location>
</feature>
<feature type="modified residue" description="Phosphoserine" evidence="45">
    <location>
        <position position="291"/>
    </location>
</feature>
<feature type="modified residue" description="Phosphoserine" evidence="45">
    <location>
        <position position="294"/>
    </location>
</feature>
<feature type="modified residue" description="Phosphoserine; by FAM20C" evidence="22">
    <location>
        <position position="364"/>
    </location>
</feature>
<feature type="modified residue" description="Phosphothreonine" evidence="44 45">
    <location>
        <position position="412"/>
    </location>
</feature>
<feature type="modified residue" description="Phosphoserine" evidence="45">
    <location>
        <position position="451"/>
    </location>
</feature>
<feature type="modified residue" description="Phosphoserine" evidence="45">
    <location>
        <position position="501"/>
    </location>
</feature>
<feature type="modified residue" description="Phosphothreonine" evidence="45">
    <location>
        <position position="505"/>
    </location>
</feature>
<feature type="modified residue" description="Phosphoserine; by FAM20C" evidence="22">
    <location>
        <position position="524"/>
    </location>
</feature>
<feature type="modified residue" description="Phosphoserine; by FAM20C" evidence="22">
    <location>
        <position position="560"/>
    </location>
</feature>
<feature type="modified residue" description="4-hydroxyproline; by P4HA1" evidence="15">
    <location>
        <position position="565"/>
    </location>
</feature>
<feature type="modified residue" description="Phosphoserine; by FAM20C" evidence="22 44 45">
    <location>
        <position position="609"/>
    </location>
</feature>
<feature type="glycosylation site" description="O-linked (GalNAc...) threonine" evidence="18">
    <location>
        <position position="320"/>
    </location>
</feature>
<feature type="glycosylation site" description="O-linked (GalNAc...) serine" evidence="18">
    <location>
        <position position="351"/>
    </location>
</feature>
<feature type="glycosylation site" description="N-linked (GlcNAc...) asparagine; in variant Caracas-2" evidence="11">
    <location>
        <position position="453"/>
    </location>
</feature>
<feature type="glycosylation site" description="N-linked (GlcNAc...) asparagine" evidence="9 13 33">
    <location>
        <position position="686"/>
    </location>
</feature>
<feature type="disulfide bond" description="Interchain" evidence="14">
    <location>
        <position position="47"/>
    </location>
</feature>
<feature type="disulfide bond" description="Interchain (with C-95 in beta chain)" evidence="14">
    <location>
        <position position="55"/>
    </location>
</feature>
<feature type="disulfide bond" description="Interchain (with C-49 in gamma chain)" evidence="14">
    <location>
        <position position="64"/>
    </location>
</feature>
<feature type="disulfide bond" description="Interchain (with C-106 in beta chain)" evidence="14">
    <location>
        <position position="68"/>
    </location>
</feature>
<feature type="disulfide bond" description="Interchain (with C-165 in gamma chain)" evidence="14 24 30 32">
    <location>
        <position position="180"/>
    </location>
</feature>
<feature type="disulfide bond" description="Interchain (with C-223 in beta chain)" evidence="14 24 30 32">
    <location>
        <position position="184"/>
    </location>
</feature>
<feature type="disulfide bond" evidence="2">
    <location>
        <begin position="461"/>
        <end position="491"/>
    </location>
</feature>
<feature type="disulfide bond" evidence="33 42">
    <location>
        <begin position="799"/>
        <end position="812"/>
    </location>
</feature>
<feature type="cross-link" description="Isoglutamyl lysine isopeptide (Lys-Gln) (interchain with Q-41 in alpha-2-antiplasmin)">
    <location>
        <position position="322"/>
    </location>
</feature>
<feature type="cross-link" description="Isoglutamyl lysine isopeptide (Gln-Lys) (interchain with K-?)">
    <location>
        <position position="347"/>
    </location>
</feature>
<feature type="cross-link" description="Isoglutamyl lysine isopeptide (Gln-Lys) (interchain with K-?)">
    <location>
        <position position="385"/>
    </location>
</feature>
<feature type="cross-link" description="Isoglutamyl lysine isopeptide (Lys-Gln) (interchain with Q-?)" evidence="3">
    <location>
        <position position="527"/>
    </location>
</feature>
<feature type="cross-link" description="Isoglutamyl lysine isopeptide (Lys-Gln) (interchain with Q-?)" evidence="3">
    <location>
        <position position="558"/>
    </location>
</feature>
<feature type="cross-link" description="Isoglutamyl lysine isopeptide (Lys-Gln) (interchain with Q-?)" evidence="3">
    <location>
        <position position="575"/>
    </location>
</feature>
<feature type="cross-link" description="Isoglutamyl lysine isopeptide (Lys-Gln) (interchain with Q-?)" evidence="3">
    <location>
        <position position="581"/>
    </location>
</feature>
<feature type="cross-link" description="Isoglutamyl lysine isopeptide (Lys-Gln) (interchain with Q-?)" evidence="3">
    <location>
        <position position="599"/>
    </location>
</feature>
<feature type="splice variant" id="VSP_001531" description="In isoform 2." evidence="37 38 39">
    <original>DCDDVLQTHPSGTQ</original>
    <variation>GIHTSPLGKPSLSP</variation>
    <location>
        <begin position="631"/>
        <end position="644"/>
    </location>
</feature>
<feature type="splice variant" id="VSP_001532" description="In isoform 2." evidence="37 38 39">
    <location>
        <begin position="645"/>
        <end position="866"/>
    </location>
</feature>
<feature type="sequence variant" id="VAR_011609" description="In dbSNP:rs2070025." evidence="36">
    <original>I</original>
    <variation>V</variation>
    <location>
        <position position="6"/>
    </location>
</feature>
<feature type="sequence variant" id="VAR_002390" description="In Lille-1; dbSNP:rs121909604.">
    <original>D</original>
    <variation>N</variation>
    <location>
        <position position="26"/>
    </location>
</feature>
<feature type="sequence variant" id="VAR_002391" description="In Rouen-1; dbSNP:rs121909605.">
    <original>G</original>
    <variation>V</variation>
    <location>
        <position position="31"/>
    </location>
</feature>
<feature type="sequence variant" id="VAR_002392" description="In DYSFIBRIN; fibrinogen Metz 1/Hershey III; dbSNP:rs121909606." evidence="12">
    <original>R</original>
    <variation>C</variation>
    <location>
        <position position="35"/>
    </location>
</feature>
<feature type="sequence variant" id="VAR_002393" description="In dbSNP:rs121909607." evidence="27">
    <original>R</original>
    <variation>H</variation>
    <location>
        <position position="35"/>
    </location>
</feature>
<feature type="sequence variant" id="VAR_002394" description="In Kyoto-2; dbSNP:rs121909609." evidence="16">
    <original>P</original>
    <variation>L</variation>
    <location>
        <position position="37"/>
    </location>
</feature>
<feature type="sequence variant" id="VAR_002397" description="In Aarhus-1; dbSNP:rs121909608.">
    <original>R</original>
    <variation>G</variation>
    <location>
        <position position="38"/>
    </location>
</feature>
<feature type="sequence variant" id="VAR_002395" description="In Munich-1; requires 2 nucleotide substitutions.">
    <original>R</original>
    <variation>N</variation>
    <location>
        <position position="38"/>
    </location>
</feature>
<feature type="sequence variant" id="VAR_002396" description="In Detroit-1; dbSNP:rs1403508334.">
    <original>R</original>
    <variation>S</variation>
    <location>
        <position position="38"/>
    </location>
</feature>
<feature type="sequence variant" id="VAR_010730" description="In Canterbury; dbSNP:rs121909614." evidence="29">
    <original>V</original>
    <variation>D</variation>
    <location>
        <position position="39"/>
    </location>
</feature>
<feature type="sequence variant" id="VAR_072721" description="In CAFBN; hypofibrinogenemia; heterozygous; decreased fibrinogen complex assembly; no effect on fibrinogen complex secretion." evidence="21">
    <original>C</original>
    <variation>R</variation>
    <location>
        <position position="55"/>
    </location>
</feature>
<feature type="sequence variant" id="VAR_002398">
    <original>S</original>
    <variation>T</variation>
    <location>
        <position position="66"/>
    </location>
</feature>
<feature type="sequence variant" id="VAR_072722" description="In CAFBN; hypofibrinogenemia; heterozygous; no effect on fibrinogen complex assembly; no effect on fibrinogen complex secretion." evidence="21">
    <original>R</original>
    <variation>P</variation>
    <location>
        <position position="129"/>
    </location>
</feature>
<feature type="sequence variant" id="VAR_002399" description="In Lima; dbSNP:rs1730757828." evidence="10">
    <original>R</original>
    <variation>S</variation>
    <location>
        <position position="160"/>
    </location>
</feature>
<feature type="sequence variant" id="VAR_072723" description="In CAFBN; hypofibrinogenemia; heterozygous; impaired fibrinogen complex assembly." evidence="21">
    <original>C</original>
    <variation>W</variation>
    <location>
        <position position="184"/>
    </location>
</feature>
<feature type="sequence variant" id="VAR_011610" description="In dbSNP:rs6050." evidence="6 8 36">
    <original>T</original>
    <variation>A</variation>
    <location>
        <position position="331"/>
    </location>
</feature>
<feature type="sequence variant" id="VAR_014168" description="In dbSNP:rs6052." evidence="6">
    <original>K</original>
    <variation>E</variation>
    <location>
        <position position="446"/>
    </location>
</feature>
<feature type="sequence variant" id="VAR_002400" description="In Caracas-2; dbSNP:rs121909610." evidence="11">
    <original>S</original>
    <variation>N</variation>
    <location>
        <position position="453"/>
    </location>
</feature>
<feature type="sequence variant" id="VAR_011611" description="In dbSNP:rs2070031." evidence="36">
    <original>T</original>
    <variation>A</variation>
    <location>
        <position position="456"/>
    </location>
</feature>
<feature type="sequence variant" id="VAR_010731" description="In AMYLD2; dbSNP:rs121909612." evidence="26">
    <original>E</original>
    <variation>V</variation>
    <location>
        <position position="545"/>
    </location>
</feature>
<feature type="sequence variant" id="VAR_002401" description="In DYSFIBRIN; fibrinogen Dusart/Paris-5; dbSNP:rs121909613." evidence="28">
    <original>R</original>
    <variation>C</variation>
    <location>
        <position position="573"/>
    </location>
</feature>
<feature type="sequence variant" id="VAR_010732" description="In AMYLD2; dbSNP:rs78506343." evidence="25">
    <original>R</original>
    <variation>L</variation>
    <location>
        <position position="573"/>
    </location>
</feature>
<feature type="sequence conflict" description="In Ref. 4; BAF83248." evidence="40" ref="4">
    <original>I</original>
    <variation>V</variation>
    <location>
        <position position="177"/>
    </location>
</feature>
<feature type="sequence conflict" description="In Ref. 10; AA sequence." evidence="40" ref="10">
    <original>SR</original>
    <variation>RS</variation>
    <location>
        <begin position="215"/>
        <end position="216"/>
    </location>
</feature>
<feature type="sequence conflict" description="In Ref. 10; AA sequence." evidence="40" ref="10">
    <original>S</original>
    <variation>G</variation>
    <location>
        <position position="299"/>
    </location>
</feature>
<feature type="sequence conflict" description="In Ref. 10; AA sequence." evidence="40" ref="10">
    <original>S</original>
    <variation>G</variation>
    <location>
        <position position="304"/>
    </location>
</feature>
<feature type="sequence conflict" description="In Ref. 11; AA sequence." evidence="40" ref="11">
    <original>GT</original>
    <variation>SG</variation>
    <location>
        <begin position="317"/>
        <end position="318"/>
    </location>
</feature>
<feature type="turn" evidence="46">
    <location>
        <begin position="27"/>
        <end position="31"/>
    </location>
</feature>
<feature type="strand" evidence="51">
    <location>
        <begin position="57"/>
        <end position="60"/>
    </location>
</feature>
<feature type="strand" evidence="51">
    <location>
        <begin position="63"/>
        <end position="65"/>
    </location>
</feature>
<feature type="helix" evidence="51">
    <location>
        <begin position="67"/>
        <end position="92"/>
    </location>
</feature>
<feature type="helix" evidence="51">
    <location>
        <begin position="94"/>
        <end position="111"/>
    </location>
</feature>
<feature type="helix" evidence="51">
    <location>
        <begin position="116"/>
        <end position="129"/>
    </location>
</feature>
<feature type="turn" evidence="47">
    <location>
        <begin position="133"/>
        <end position="135"/>
    </location>
</feature>
<feature type="turn" evidence="48">
    <location>
        <begin position="139"/>
        <end position="141"/>
    </location>
</feature>
<feature type="helix" evidence="48">
    <location>
        <begin position="142"/>
        <end position="178"/>
    </location>
</feature>
<feature type="turn" evidence="48">
    <location>
        <begin position="179"/>
        <end position="183"/>
    </location>
</feature>
<feature type="strand" evidence="50">
    <location>
        <begin position="184"/>
        <end position="186"/>
    </location>
</feature>
<feature type="helix" evidence="48">
    <location>
        <begin position="195"/>
        <end position="209"/>
    </location>
</feature>
<feature type="turn" evidence="51">
    <location>
        <begin position="226"/>
        <end position="228"/>
    </location>
</feature>
<feature type="strand" evidence="52">
    <location>
        <begin position="337"/>
        <end position="343"/>
    </location>
</feature>
<feature type="strand" evidence="53">
    <location>
        <begin position="582"/>
        <end position="587"/>
    </location>
</feature>
<feature type="strand" evidence="49">
    <location>
        <begin position="673"/>
        <end position="681"/>
    </location>
</feature>
<feature type="helix" evidence="49">
    <location>
        <begin position="689"/>
        <end position="694"/>
    </location>
</feature>
<feature type="helix" evidence="49">
    <location>
        <begin position="711"/>
        <end position="718"/>
    </location>
</feature>
<feature type="strand" evidence="49">
    <location>
        <begin position="723"/>
        <end position="729"/>
    </location>
</feature>
<feature type="strand" evidence="49">
    <location>
        <begin position="735"/>
        <end position="744"/>
    </location>
</feature>
<feature type="turn" evidence="49">
    <location>
        <begin position="747"/>
        <end position="751"/>
    </location>
</feature>
<feature type="strand" evidence="49">
    <location>
        <begin position="753"/>
        <end position="762"/>
    </location>
</feature>
<feature type="turn" evidence="49">
    <location>
        <begin position="765"/>
        <end position="768"/>
    </location>
</feature>
<feature type="turn" evidence="49">
    <location>
        <begin position="771"/>
        <end position="773"/>
    </location>
</feature>
<feature type="helix" evidence="49">
    <location>
        <begin position="775"/>
        <end position="778"/>
    </location>
</feature>
<feature type="strand" evidence="49">
    <location>
        <begin position="793"/>
        <end position="797"/>
    </location>
</feature>
<feature type="helix" evidence="49">
    <location>
        <begin position="799"/>
        <end position="803"/>
    </location>
</feature>
<feature type="strand" evidence="49">
    <location>
        <begin position="810"/>
        <end position="812"/>
    </location>
</feature>
<feature type="strand" evidence="49">
    <location>
        <begin position="814"/>
        <end position="816"/>
    </location>
</feature>
<feature type="strand" evidence="49">
    <location>
        <begin position="823"/>
        <end position="826"/>
    </location>
</feature>
<feature type="helix" evidence="49">
    <location>
        <begin position="829"/>
        <end position="831"/>
    </location>
</feature>
<feature type="strand" evidence="49">
    <location>
        <begin position="840"/>
        <end position="843"/>
    </location>
</feature>
<feature type="helix" evidence="49">
    <location>
        <begin position="844"/>
        <end position="847"/>
    </location>
</feature>
<feature type="strand" evidence="49">
    <location>
        <begin position="854"/>
        <end position="861"/>
    </location>
</feature>
<feature type="sequence conflict" description="In Ref. 3; AAK31372." evidence="40" ref="3">
    <original>PSLSP</original>
    <variation>LPCPPRLS</variation>
    <location sequence="P02671-2">
        <begin position="640"/>
        <end position="644"/>
    </location>
</feature>
<accession>P02671</accession>
<accession>A8K3E4</accession>
<accession>D3DP14</accession>
<accession>D3DP15</accession>
<accession>Q4QQH7</accession>
<accession>Q9BX62</accession>
<accession>Q9UCH2</accession>
<comment type="function">
    <text evidence="1">Cleaved by the protease thrombin to yield monomers which, together with fibrinogen beta (FGB) and fibrinogen gamma (FGG), polymerize to form an insoluble fibrin matrix. Fibrin has a major function in hemostasis as one of the primary components of blood clots. In addition, functions during the early stages of wound repair to stabilize the lesion and guide cell migration during re-epithelialization. Was originally thought to be essential for platelet aggregation, based on in vitro studies using anticoagulated blood. However, subsequent studies have shown that it is not absolutely required for thrombus formation in vivo. Enhances expression of SELP in activated platelets via an ITGB3-dependent pathway. Maternal fibrinogen is essential for successful pregnancy. Fibrin deposition is also associated with infection, where it protects against IFNG-mediated hemorrhage. May also facilitate the immune response via both innate and T-cell mediated pathways.</text>
</comment>
<comment type="subunit">
    <text evidence="23 24 30 31 32 33">Heterohexamer; disulfide linked. Contains 2 sets of 3 non-identical chains (alpha, beta and gamma). The 2 heterotrimers are in head to head conformation with the N-termini in a small central domain.</text>
</comment>
<comment type="subunit">
    <text evidence="7 20">(Microbial infection) Interacts with Staphylococcus aureus protein Fib; this interaction inhibits fibrinogen-dependent platelet aggregation and protects the bacteria form phagocytosis.</text>
</comment>
<comment type="interaction">
    <interactant intactId="EBI-348571">
        <id>P02671</id>
    </interactant>
    <interactant intactId="EBI-7147442">
        <id>Q8IXL6</id>
        <label>FAM20C</label>
    </interactant>
    <organismsDiffer>false</organismsDiffer>
    <experiments>2</experiments>
</comment>
<comment type="interaction">
    <interactant intactId="EBI-348571">
        <id>P02671</id>
    </interactant>
    <interactant intactId="EBI-359854">
        <id>P27348</id>
        <label>YWHAQ</label>
    </interactant>
    <organismsDiffer>false</organismsDiffer>
    <experiments>2</experiments>
</comment>
<comment type="interaction">
    <interactant intactId="EBI-9640259">
        <id>P02671-2</id>
    </interactant>
    <interactant intactId="EBI-949824">
        <id>O00471</id>
        <label>EXOC5</label>
    </interactant>
    <organismsDiffer>false</organismsDiffer>
    <experiments>3</experiments>
</comment>
<comment type="interaction">
    <interactant intactId="EBI-9640259">
        <id>P02671-2</id>
    </interactant>
    <interactant intactId="EBI-21591415">
        <id>P13473-2</id>
        <label>LAMP2</label>
    </interactant>
    <organismsDiffer>false</organismsDiffer>
    <experiments>3</experiments>
</comment>
<comment type="interaction">
    <interactant intactId="EBI-9640259">
        <id>P02671-2</id>
    </interactant>
    <interactant intactId="EBI-346869">
        <id>Q9Y3L3</id>
        <label>SH3BP1</label>
    </interactant>
    <organismsDiffer>false</organismsDiffer>
    <experiments>3</experiments>
</comment>
<comment type="interaction">
    <interactant intactId="EBI-9640259">
        <id>P02671-2</id>
    </interactant>
    <interactant intactId="EBI-2623095">
        <id>Q9Y371</id>
        <label>SH3GLB1</label>
    </interactant>
    <organismsDiffer>false</organismsDiffer>
    <experiments>3</experiments>
</comment>
<comment type="interaction">
    <interactant intactId="EBI-9640259">
        <id>P02671-2</id>
    </interactant>
    <interactant intactId="EBI-990792">
        <id>P00441</id>
        <label>SOD1</label>
    </interactant>
    <organismsDiffer>false</organismsDiffer>
    <experiments>3</experiments>
</comment>
<comment type="interaction">
    <interactant intactId="EBI-9640259">
        <id>P02671-2</id>
    </interactant>
    <interactant intactId="EBI-9071709">
        <id>P61266</id>
        <label>STX1B</label>
    </interactant>
    <organismsDiffer>false</organismsDiffer>
    <experiments>3</experiments>
</comment>
<comment type="interaction">
    <interactant intactId="EBI-9640259">
        <id>P02671-2</id>
    </interactant>
    <interactant intactId="EBI-11956649">
        <id>P32856-2</id>
        <label>STX2</label>
    </interactant>
    <organismsDiffer>false</organismsDiffer>
    <experiments>3</experiments>
</comment>
<comment type="interaction">
    <interactant intactId="EBI-9640259">
        <id>P02671-2</id>
    </interactant>
    <interactant intactId="EBI-1105213">
        <id>Q9UBB9</id>
        <label>TFIP11</label>
    </interactant>
    <organismsDiffer>false</organismsDiffer>
    <experiments>3</experiments>
</comment>
<comment type="interaction">
    <interactant intactId="EBI-9640259">
        <id>P02671-2</id>
    </interactant>
    <interactant intactId="EBI-721293">
        <id>Q9BTV4</id>
        <label>TMEM43</label>
    </interactant>
    <organismsDiffer>false</organismsDiffer>
    <experiments>3</experiments>
</comment>
<comment type="interaction">
    <interactant intactId="EBI-9640259">
        <id>P02671-2</id>
    </interactant>
    <interactant intactId="EBI-12123928">
        <id>P09493-10</id>
        <label>TPM1</label>
    </interactant>
    <organismsDiffer>false</organismsDiffer>
    <experiments>3</experiments>
</comment>
<comment type="interaction">
    <interactant intactId="EBI-9640259">
        <id>P02671-2</id>
    </interactant>
    <interactant intactId="EBI-355607">
        <id>P06753</id>
        <label>TPM3</label>
    </interactant>
    <organismsDiffer>false</organismsDiffer>
    <experiments>3</experiments>
</comment>
<comment type="subcellular location">
    <subcellularLocation>
        <location evidence="14 32">Secreted</location>
    </subcellularLocation>
</comment>
<comment type="alternative products">
    <event type="alternative splicing"/>
    <isoform>
        <id>P02671-1</id>
        <name>1</name>
        <name>Alpha-E</name>
        <sequence type="displayed"/>
    </isoform>
    <isoform>
        <id>P02671-2</id>
        <name>2</name>
        <name>Alpha</name>
        <sequence type="described" ref="VSP_001531 VSP_001532"/>
    </isoform>
</comment>
<comment type="tissue specificity">
    <text evidence="14 32">Detected in blood plasma (at protein level).</text>
</comment>
<comment type="domain">
    <text evidence="14 32 40">A long coiled coil structure formed by 3 polypeptide chains connects the central nodule to the C-terminal domains (distal nodules). The long C-terminal ends of the alpha chains fold back, contributing a fourth strand to the coiled coil structure.</text>
</comment>
<comment type="PTM">
    <text evidence="9 13 19 33 40">The alpha chain is normally not N-glycosylated (PubMed:23151259), even though glycosylation at Asn-686 was observed when a fragment of the protein was expressed in insect cells (PubMed:9689040). It is well known that heterologous expression of isolated domains can lead to adventitious protein modifications. Besides, glycosylation at Asn-686 is supported by large-scale glycoproteomics studies (PubMed:16335952, PubMed:19159218), but the evidence is still quite tenuous. Most likely, Asn-686 is not glycosylated in the healthy human body, or only with low efficiency.</text>
</comment>
<comment type="PTM">
    <text evidence="18">O-glycosylated.</text>
</comment>
<comment type="PTM">
    <text>Forms F13A-mediated cross-links between a glutamine and the epsilon-amino group of a lysine residue, forming fibronectin-fibrinogen heteropolymers.</text>
</comment>
<comment type="PTM">
    <text>About one-third of the alpha chains in the molecules in blood were found to be phosphorylated.</text>
</comment>
<comment type="PTM">
    <text evidence="17">Conversion of fibrinogen to fibrin is triggered by thrombin, which cleaves fibrinopeptides A and B from alpha and beta chains, and thus exposes the N-terminal polymerization sites responsible for the formation of the soft clot. The soft clot is converted into the hard clot by factor XIIIA which catalyzes the epsilon-(gamma-glutamyl)lysine cross-linking between gamma chains (stronger) and between alpha chains (weaker) of different monomers.</text>
</comment>
<comment type="PTM">
    <text evidence="22">Phosphorylated by FAM20C in the extracellular medium.</text>
</comment>
<comment type="disease" evidence="21">
    <disease id="DI-01387">
        <name>Congenital afibrinogenemia</name>
        <acronym>CAFBN</acronym>
        <description>Rare autosomal recessive disorder is characterized by bleeding that varies from mild to severe and by complete absence or extremely low levels of plasma and platelet fibrinogen.</description>
        <dbReference type="MIM" id="202400"/>
    </disease>
    <text>The disease is caused by variants affecting the gene represented in this entry. The majority of cases of afibrinogenemia are due to truncating mutations. Variations in position Arg-35 (the site of cleavage of fibrinopeptide a by thrombin) leads to alpha-dysfibrinogenemias.</text>
</comment>
<comment type="disease" evidence="25 26">
    <disease id="DI-00104">
        <name>Amyloidosis, hereditary systemic 2</name>
        <acronym>AMYLD2</acronym>
        <description>A form of hereditary systemic amyloidosis, a disorder characterized by amyloid deposition in multiple tissues resulting in a wide clinical spectrum. AMYLD2 is an autosomal dominant form characterized by deposition of amyloid preferentially in the glomeruli of the kidney. It clinically presents with hypertension, proteinuria, and finally azotemia. Involvement of liver and spleen may be seen in advanced cases, but heavy glomerular deposition without significant medium sized vessel involvement is characteristic of the disease.</description>
        <dbReference type="MIM" id="105200"/>
    </disease>
    <text>The disease is caused by variants affecting the gene represented in this entry.</text>
</comment>
<comment type="disease" evidence="12 28">
    <disease id="DI-04218">
        <name>Dysfibrinogenemia, congenital</name>
        <acronym>DYSFIBRIN</acronym>
        <description>A disorder characterized by qualitative abnormalities (dysfibrinogenemia) of the circulating fibrinogen. Affected individuals are frequently asymptomatic, but some patients have bleeding diathesis, thromboembolic complications, or both. In some cases, dysfibrinogenemia is associated with low circulating fibrinogen levels (hypodysfibrinogenemia).</description>
        <dbReference type="MIM" id="616004"/>
    </disease>
    <text>The disease is caused by variants affecting the gene represented in this entry.</text>
</comment>
<comment type="online information" name="Wikipedia">
    <link uri="https://en.wikipedia.org/wiki/Fibrinogen"/>
    <text>Fibrinogen entry</text>
</comment>